<keyword id="KW-0025">Alternative splicing</keyword>
<keyword id="KW-0963">Cytoplasm</keyword>
<keyword id="KW-0225">Disease variant</keyword>
<keyword id="KW-0256">Endoplasmic reticulum</keyword>
<keyword id="KW-0325">Glycoprotein</keyword>
<keyword id="KW-0328">Glycosyltransferase</keyword>
<keyword id="KW-0443">Lipid metabolism</keyword>
<keyword id="KW-0472">Membrane</keyword>
<keyword id="KW-1267">Proteomics identification</keyword>
<keyword id="KW-1185">Reference proteome</keyword>
<keyword id="KW-0732">Signal</keyword>
<keyword id="KW-0808">Transferase</keyword>
<keyword id="KW-0812">Transmembrane</keyword>
<keyword id="KW-1133">Transmembrane helix</keyword>
<sequence>MAVESQGGRPLVLGLLLCVLGPVVSHAGKILLIPVDGSHWLSMLGAIQQLQQRGHEIVVLAPDASLYIRDGAFYTLKTYPVPFQREDVKESFVSLGHNVFENDSFLQRVIKTYKKIKKDSAMLLSGCSHLLHNKELMASLAESSFDVMLTDPFLPCSPIVAQYLSLPTVFFLHALPCSLEFEATQCPNPFSYVPRPLSSHSDHMTFLQRVKNMLIAFSQNFLCDVVYSPYATLASEFLQREVTVQDLLSSASVWLFRSDFVKDYPRPIMPNMVFVGGINCLHQNPLSQEFEAYINASGEHGIVVFSLGSMVSEIPEKKAMAIADALGKIPQTVLWRYTGTRPSNLANNTILVKWLPQNDLLGHPMTRAFITHAGSHGVYESICNGVPMVMMPLFGDQMDNAKRMETKGAGVTLNVLEMTSEDLENALKAVINDKSYKENIMRLSSLHKDRPVEPLDLAVFWVEFVMRHKGAPHLRPAAHDLTWYQYHSLDVIGFLLAVVLTVAFITFKCCAYGYRKCLGKKGRVKKAHKSKTH</sequence>
<organism>
    <name type="scientific">Homo sapiens</name>
    <name type="common">Human</name>
    <dbReference type="NCBI Taxonomy" id="9606"/>
    <lineage>
        <taxon>Eukaryota</taxon>
        <taxon>Metazoa</taxon>
        <taxon>Chordata</taxon>
        <taxon>Craniata</taxon>
        <taxon>Vertebrata</taxon>
        <taxon>Euteleostomi</taxon>
        <taxon>Mammalia</taxon>
        <taxon>Eutheria</taxon>
        <taxon>Euarchontoglires</taxon>
        <taxon>Primates</taxon>
        <taxon>Haplorrhini</taxon>
        <taxon>Catarrhini</taxon>
        <taxon>Hominidae</taxon>
        <taxon>Homo</taxon>
    </lineage>
</organism>
<feature type="signal peptide" evidence="1">
    <location>
        <begin position="1"/>
        <end position="25"/>
    </location>
</feature>
<feature type="chain" id="PRO_0000036000" description="UDP-glucuronosyltransferase 1A1">
    <location>
        <begin position="26"/>
        <end position="533"/>
    </location>
</feature>
<feature type="transmembrane region" description="Helical" evidence="1">
    <location>
        <begin position="491"/>
        <end position="507"/>
    </location>
</feature>
<feature type="glycosylation site" description="N-linked (GlcNAc...) asparagine" evidence="25">
    <location>
        <position position="102"/>
    </location>
</feature>
<feature type="glycosylation site" description="N-linked (GlcNAc...) asparagine" evidence="1">
    <location>
        <position position="295"/>
    </location>
</feature>
<feature type="glycosylation site" description="N-linked (GlcNAc...) asparagine" evidence="1">
    <location>
        <position position="347"/>
    </location>
</feature>
<feature type="splice variant" id="VSP_053958" description="In isoform 2." evidence="51">
    <original>SYKENIMRLSSLHKDRPVEPLDLAVFWVEFVMRHKGAPHLRPAAHDLTWYQYHSLDVIGFLLAVVLTVAFITFKCCAYGYRKCLGKKGRVKKAHKSKTH</original>
    <variation>RKKQQSGRQM</variation>
    <location>
        <begin position="435"/>
        <end position="533"/>
    </location>
</feature>
<feature type="sequence variant" id="VAR_019410" description="In CN2; mutant protein rapidly degraded by the proteasome owing to its mislocalization in the cell; dbSNP:rs111033541." evidence="2 9 28 43">
    <original>L</original>
    <variation>R</variation>
    <location>
        <position position="15"/>
    </location>
</feature>
<feature type="sequence variant" id="VAR_026134" description="In CN2." evidence="13">
    <original>P</original>
    <variation>Q</variation>
    <location>
        <position position="34"/>
    </location>
</feature>
<feature type="sequence variant" id="VAR_071402" description="In CN1; dbSNP:rs1697429657." evidence="33">
    <original>D</original>
    <variation>N</variation>
    <location>
        <position position="36"/>
    </location>
</feature>
<feature type="sequence variant" id="VAR_026135" description="In CN1; dbSNP:rs72551339." evidence="2">
    <original>H</original>
    <variation>D</variation>
    <location>
        <position position="39"/>
    </location>
</feature>
<feature type="sequence variant" id="VAR_009504" description="In CN2, GILBS and HBLRTFN; has significant residual bilirubin glucuronidation activity of about 25% to 50% of that of the wild-type protein; displays no change in biluribin affinity; decreased SN-38 glucuronosyltransferase activity; dbSNP:rs4148323." evidence="2 3 6 20 28 36 42 44">
    <original>G</original>
    <variation>R</variation>
    <location>
        <position position="71"/>
    </location>
</feature>
<feature type="sequence variant" id="VAR_026136" description="In GILBS; displays less than 10% of wild-type bilirubin glucuronidation activity; dbSNP:rs56059937." evidence="5 20">
    <original>F</original>
    <variation>L</variation>
    <location>
        <position position="83"/>
    </location>
</feature>
<feature type="sequence variant" id="VAR_007695" description="In CN1 and CN2; has nearly normal activity at pH 7.6 and is inactive at pH 6.4; dbSNP:rs587776762." evidence="2 13 31 39 40">
    <location>
        <position position="170"/>
    </location>
</feature>
<feature type="sequence variant" id="VAR_064955" description="In CN2; dbSNP:rs587776762." evidence="18">
    <location>
        <position position="171"/>
    </location>
</feature>
<feature type="sequence variant" id="VAR_019411" description="In CN2; has low residual bilirubin glucuronidation activity of about 4.6% of that of the wild-type protein; dbSNP:rs72551341." evidence="2 4 28 39">
    <original>L</original>
    <variation>Q</variation>
    <location>
        <position position="175"/>
    </location>
</feature>
<feature type="sequence variant" id="VAR_007697" description="In CN1; dbSNP:rs72551342." evidence="2 39">
    <original>C</original>
    <variation>R</variation>
    <location>
        <position position="177"/>
    </location>
</feature>
<feature type="sequence variant" id="VAR_064956" description="In CN2; has low residual bilirubin glucuronidation activity of about 5.3% of that of the wild-type protein." evidence="28">
    <original>S</original>
    <variation>F</variation>
    <location>
        <position position="191"/>
    </location>
</feature>
<feature type="sequence variant" id="VAR_007698" description="In CN2; has low residual bilirubin glucuronidation activity of about 2.9% of that of the wild-type protein; dbSNP:rs72551343." evidence="2 13 28 39 44">
    <original>R</original>
    <variation>W</variation>
    <location>
        <position position="209"/>
    </location>
</feature>
<feature type="sequence variant" id="VAR_026137" description="In CN2; dbSNP:rs35003977." evidence="2 13">
    <original>V</original>
    <variation>G</variation>
    <location>
        <position position="225"/>
    </location>
</feature>
<feature type="sequence variant" id="VAR_009505" description="In CN2 and GILBS; displays 2-fold decrease in biluribin affinity and 61% of wild-type bilirubin glucuronidation activity; decreased SN-38 glucuronosyltransferase activity; dbSNP:rs35350960." evidence="2 6 20 36 44">
    <original>P</original>
    <variation>Q</variation>
    <location>
        <position position="229"/>
    </location>
</feature>
<feature type="sequence variant" id="VAR_071403" description="In CN2; dbSNP:rs754922685." evidence="33">
    <original>Y</original>
    <variation>C</variation>
    <location>
        <position position="230"/>
    </location>
</feature>
<feature type="sequence variant" id="VAR_007699" description="In CN1; dbSNP:rs72551345." evidence="2 39">
    <original>G</original>
    <variation>R</variation>
    <location>
        <position position="276"/>
    </location>
</feature>
<feature type="sequence variant" id="VAR_064957" description="In CN2; dbSNP:rs397978903." evidence="18">
    <original>N</original>
    <variation>Y</variation>
    <location>
        <position position="279"/>
    </location>
</feature>
<feature type="sequence variant" id="VAR_026138" description="In CN1." evidence="2">
    <original>E</original>
    <variation>V</variation>
    <location>
        <position position="291"/>
    </location>
</feature>
<feature type="sequence variant" id="VAR_007700" description="In CN1; dbSNP:rs758873309." evidence="38">
    <original>A</original>
    <variation>V</variation>
    <location>
        <position position="292"/>
    </location>
</feature>
<feature type="sequence variant" id="VAR_026139" description="In GILBS and CN2; 40-55% normal bilirubin glucuronidation activity; normal Km for bilirubin; when homozygous far less repressive and generates the mild Gilbert phenotype; dbSNP:rs72551347." evidence="2 46">
    <original>I</original>
    <variation>T</variation>
    <location>
        <position position="294"/>
    </location>
</feature>
<feature type="sequence variant" id="VAR_007701" description="In CN1; no bilirubin glucuronidation activity; dbSNP:rs62625011." evidence="2 37 38">
    <original>G</original>
    <variation>E</variation>
    <location>
        <position position="308"/>
    </location>
</feature>
<feature type="sequence variant" id="VAR_007702" description="In CN2; has no residual bilirubin glucuronidation activity; dbSNP:rs72551348." evidence="2 28 41">
    <original>Q</original>
    <variation>R</variation>
    <location>
        <position position="331"/>
    </location>
</feature>
<feature type="sequence variant" id="VAR_026140" description="In CN1 and CN2." evidence="13">
    <original>R</original>
    <variation>L</variation>
    <location>
        <position position="336"/>
    </location>
</feature>
<feature type="sequence variant" id="VAR_026141" description="In CN1; dbSNP:rs750453538." evidence="13">
    <original>R</original>
    <variation>Q</variation>
    <location>
        <position position="336"/>
    </location>
</feature>
<feature type="sequence variant" id="VAR_026142" description="In CN2; has very low residual bilirubin glucuronidation activity of about 0.4% of that of the wild-type protein; dbSNP:rs139607673." evidence="2 13 28">
    <original>R</original>
    <variation>W</variation>
    <location>
        <position position="336"/>
    </location>
</feature>
<feature type="sequence variant" id="VAR_026143" description="In CN2; dbSNP:rs1559414817." evidence="13 18">
    <original>W</original>
    <variation>R</variation>
    <location>
        <position position="354"/>
    </location>
</feature>
<feature type="sequence variant" id="VAR_007703" description="In CN1; dbSNP:rs72551351." evidence="2 13 38">
    <original>Q</original>
    <variation>R</variation>
    <location>
        <position position="357"/>
    </location>
</feature>
<feature type="sequence variant" id="VAR_071404" description="In CN2; dbSNP:rs55750087." evidence="31">
    <original>R</original>
    <variation>C</variation>
    <location>
        <position position="367"/>
    </location>
</feature>
<feature type="sequence variant" id="VAR_012283" description="In GILBS; dbSNP:rs55750087." evidence="2 36">
    <original>R</original>
    <variation>G</variation>
    <location>
        <position position="367"/>
    </location>
</feature>
<feature type="sequence variant" id="VAR_007704" description="In CN1; dbSNP:rs72551352." evidence="2 38">
    <original>A</original>
    <variation>T</variation>
    <location>
        <position position="368"/>
    </location>
</feature>
<feature type="sequence variant" id="VAR_064958" description="In CN2; dbSNP:rs748989741." evidence="18">
    <original>I</original>
    <variation>V</variation>
    <location>
        <position position="370"/>
    </location>
</feature>
<feature type="sequence variant" id="VAR_007705" description="In CN1; no bilirubin glucuronidation activity; dbSNP:rs72551353." evidence="2 13 14 37 39">
    <original>S</original>
    <variation>F</variation>
    <location>
        <position position="375"/>
    </location>
</feature>
<feature type="sequence variant" id="VAR_026144" description="In CN1 and CN2; dbSNP:rs1349037761." evidence="2">
    <original>H</original>
    <variation>R</variation>
    <location>
        <position position="376"/>
    </location>
</feature>
<feature type="sequence variant" id="VAR_026145" description="In CN1 and CN2; dbSNP:rs1283652721." evidence="13">
    <original>G</original>
    <variation>V</variation>
    <location>
        <position position="377"/>
    </location>
</feature>
<feature type="sequence variant" id="VAR_007706" description="In CN1; dbSNP:rs72551354." evidence="2 38">
    <original>S</original>
    <variation>R</variation>
    <location>
        <position position="381"/>
    </location>
</feature>
<feature type="sequence variant" id="VAR_064959" description="In CN2; has no residual bilirubin glucuronidation activity." evidence="28">
    <original>P</original>
    <variation>H</variation>
    <location>
        <position position="387"/>
    </location>
</feature>
<feature type="sequence variant" id="VAR_026146" description="In CN1; dbSNP:rs901936528." evidence="2 13">
    <original>P</original>
    <variation>S</variation>
    <location>
        <position position="387"/>
    </location>
</feature>
<feature type="sequence variant" id="VAR_026147" description="In CN1; has no residual bilirubin glucuronidation activity; dbSNP:rs367897068." evidence="13 18 28">
    <original>G</original>
    <variation>V</variation>
    <location>
        <position position="395"/>
    </location>
</feature>
<feature type="sequence variant" id="VAR_019412" description="In CN2; dbSNP:rs28934877." evidence="7">
    <original>N</original>
    <variation>D</variation>
    <location>
        <position position="400"/>
    </location>
</feature>
<feature type="sequence variant" id="VAR_007707" description="In CN1; dbSNP:rs72551355." evidence="2 38">
    <original>A</original>
    <variation>P</variation>
    <location>
        <position position="401"/>
    </location>
</feature>
<feature type="sequence variant" id="VAR_064960" description="In CN1; has no residual bilirubin glucuronidation activity; N-glycosylation does take place at this new additional site." evidence="28">
    <original>K</original>
    <variation>T</variation>
    <location>
        <position position="402"/>
    </location>
</feature>
<feature type="sequence variant" id="VAR_026148" description="In CN2; dbSNP:rs778766461." evidence="13">
    <original>R</original>
    <variation>C</variation>
    <location>
        <position position="403"/>
    </location>
</feature>
<feature type="sequence variant" id="VAR_007708" description="In CN1; dbSNP:rs72551356." evidence="2 38">
    <original>K</original>
    <variation>E</variation>
    <location>
        <position position="428"/>
    </location>
</feature>
<feature type="sequence variant" id="VAR_064961" description="In CN2; has no residual bilirubin glucuronidation activity; dbSNP:rs758411577." evidence="18 28">
    <original>L</original>
    <variation>P</variation>
    <location>
        <position position="443"/>
    </location>
</feature>
<feature type="sequence variant" id="VAR_026149" description="In CN1 and CN2; dbSNP:rs1476500325." evidence="13 18">
    <original>W</original>
    <variation>R</variation>
    <location>
        <position position="461"/>
    </location>
</feature>
<feature type="sequence variant" id="VAR_026150" description="In CN2; dbSNP:rs1700515616." evidence="13">
    <original>A</original>
    <variation>D</variation>
    <location>
        <position position="478"/>
    </location>
</feature>
<feature type="sequence variant" id="VAR_007709" description="In CN2, GILBS and HBLRTFN; displays less than 10% of wild-type bilirubin glucuronidation activity; decreased SN-38 glucuronosyltransferase activity; dbSNP:rs34993780." evidence="2 3 6 20 28 42 44 45">
    <original>Y</original>
    <variation>D</variation>
    <location>
        <position position="486"/>
    </location>
</feature>
<feature type="sequence variant" id="VAR_025355" description="In dbSNP:rs1042709.">
    <original>A</original>
    <variation>P</variation>
    <location>
        <position position="511"/>
    </location>
</feature>
<feature type="mutagenesis site" description="Decreased SN-38 glucuronosyltransferase activity." evidence="6">
    <original>L</original>
    <variation>R</variation>
    <location>
        <position position="233"/>
    </location>
</feature>
<protein>
    <recommendedName>
        <fullName evidence="48 50">UDP-glucuronosyltransferase 1A1</fullName>
        <shortName evidence="47">UGT1A1</shortName>
        <ecNumber evidence="12 20 21 23 24 28 32">2.4.1.17</ecNumber>
    </recommendedName>
    <alternativeName>
        <fullName>Bilirubin-specific UDPGT isozyme 1</fullName>
        <shortName>hUG-BR1</shortName>
    </alternativeName>
    <alternativeName>
        <fullName>UDP-glucuronosyltransferase 1-1</fullName>
        <shortName>UDPGT 1-1</shortName>
        <shortName>UGT1*1</shortName>
        <shortName>UGT1-01</shortName>
        <shortName>UGT1.1</shortName>
    </alternativeName>
    <alternativeName>
        <fullName>UDP-glucuronosyltransferase 1A isoform 1</fullName>
    </alternativeName>
</protein>
<accession>P22309</accession>
<accession>A6NJC3</accession>
<accession>B8K286</accession>
<evidence type="ECO:0000255" key="1"/>
<evidence type="ECO:0000269" key="2">
    <source>
    </source>
</evidence>
<evidence type="ECO:0000269" key="3">
    <source>
    </source>
</evidence>
<evidence type="ECO:0000269" key="4">
    <source>
    </source>
</evidence>
<evidence type="ECO:0000269" key="5">
    <source>
    </source>
</evidence>
<evidence type="ECO:0000269" key="6">
    <source>
    </source>
</evidence>
<evidence type="ECO:0000269" key="7">
    <source>
    </source>
</evidence>
<evidence type="ECO:0000269" key="8">
    <source>
    </source>
</evidence>
<evidence type="ECO:0000269" key="9">
    <source>
    </source>
</evidence>
<evidence type="ECO:0000269" key="10">
    <source>
    </source>
</evidence>
<evidence type="ECO:0000269" key="11">
    <source>
    </source>
</evidence>
<evidence type="ECO:0000269" key="12">
    <source>
    </source>
</evidence>
<evidence type="ECO:0000269" key="13">
    <source>
    </source>
</evidence>
<evidence type="ECO:0000269" key="14">
    <source>
    </source>
</evidence>
<evidence type="ECO:0000269" key="15">
    <source>
    </source>
</evidence>
<evidence type="ECO:0000269" key="16">
    <source>
    </source>
</evidence>
<evidence type="ECO:0000269" key="17">
    <source>
    </source>
</evidence>
<evidence type="ECO:0000269" key="18">
    <source>
    </source>
</evidence>
<evidence type="ECO:0000269" key="19">
    <source>
    </source>
</evidence>
<evidence type="ECO:0000269" key="20">
    <source>
    </source>
</evidence>
<evidence type="ECO:0000269" key="21">
    <source>
    </source>
</evidence>
<evidence type="ECO:0000269" key="22">
    <source>
    </source>
</evidence>
<evidence type="ECO:0000269" key="23">
    <source>
    </source>
</evidence>
<evidence type="ECO:0000269" key="24">
    <source>
    </source>
</evidence>
<evidence type="ECO:0000269" key="25">
    <source>
    </source>
</evidence>
<evidence type="ECO:0000269" key="26">
    <source>
    </source>
</evidence>
<evidence type="ECO:0000269" key="27">
    <source>
    </source>
</evidence>
<evidence type="ECO:0000269" key="28">
    <source>
    </source>
</evidence>
<evidence type="ECO:0000269" key="29">
    <source>
    </source>
</evidence>
<evidence type="ECO:0000269" key="30">
    <source>
    </source>
</evidence>
<evidence type="ECO:0000269" key="31">
    <source>
    </source>
</evidence>
<evidence type="ECO:0000269" key="32">
    <source>
    </source>
</evidence>
<evidence type="ECO:0000269" key="33">
    <source>
    </source>
</evidence>
<evidence type="ECO:0000269" key="34">
    <source>
    </source>
</evidence>
<evidence type="ECO:0000269" key="35">
    <source>
    </source>
</evidence>
<evidence type="ECO:0000269" key="36">
    <source>
    </source>
</evidence>
<evidence type="ECO:0000269" key="37">
    <source>
    </source>
</evidence>
<evidence type="ECO:0000269" key="38">
    <source>
    </source>
</evidence>
<evidence type="ECO:0000269" key="39">
    <source>
    </source>
</evidence>
<evidence type="ECO:0000269" key="40">
    <source>
    </source>
</evidence>
<evidence type="ECO:0000269" key="41">
    <source>
    </source>
</evidence>
<evidence type="ECO:0000269" key="42">
    <source>
    </source>
</evidence>
<evidence type="ECO:0000269" key="43">
    <source>
    </source>
</evidence>
<evidence type="ECO:0000269" key="44">
    <source>
    </source>
</evidence>
<evidence type="ECO:0000269" key="45">
    <source>
    </source>
</evidence>
<evidence type="ECO:0000269" key="46">
    <source>
    </source>
</evidence>
<evidence type="ECO:0000303" key="47">
    <source>
    </source>
</evidence>
<evidence type="ECO:0000303" key="48">
    <source>
    </source>
</evidence>
<evidence type="ECO:0000303" key="49">
    <source>
    </source>
</evidence>
<evidence type="ECO:0000303" key="50">
    <source>
    </source>
</evidence>
<evidence type="ECO:0000303" key="51">
    <source ref="4"/>
</evidence>
<evidence type="ECO:0000305" key="52"/>
<evidence type="ECO:0000305" key="53">
    <source>
    </source>
</evidence>
<evidence type="ECO:0000305" key="54">
    <source>
    </source>
</evidence>
<evidence type="ECO:0000305" key="55">
    <source>
    </source>
</evidence>
<evidence type="ECO:0000305" key="56">
    <source>
    </source>
</evidence>
<evidence type="ECO:0000305" key="57">
    <source>
    </source>
</evidence>
<evidence type="ECO:0000305" key="58">
    <source>
    </source>
</evidence>
<evidence type="ECO:0000305" key="59">
    <source>
    </source>
</evidence>
<evidence type="ECO:0000305" key="60">
    <source>
    </source>
</evidence>
<evidence type="ECO:0000305" key="61">
    <source>
    </source>
</evidence>
<evidence type="ECO:0000305" key="62">
    <source>
    </source>
</evidence>
<evidence type="ECO:0000305" key="63">
    <source>
    </source>
</evidence>
<evidence type="ECO:0000305" key="64">
    <source>
    </source>
</evidence>
<evidence type="ECO:0000305" key="65">
    <source>
    </source>
</evidence>
<evidence type="ECO:0000305" key="66">
    <source>
    </source>
</evidence>
<evidence type="ECO:0000312" key="67">
    <source>
        <dbReference type="HGNC" id="HGNC:12530"/>
    </source>
</evidence>
<name>UD11_HUMAN</name>
<gene>
    <name evidence="67" type="primary">UGT1A1</name>
    <name type="synonym">GNT1</name>
    <name type="synonym">UGT1</name>
</gene>
<dbReference type="EC" id="2.4.1.17" evidence="12 20 21 23 24 28 32"/>
<dbReference type="EMBL" id="M57899">
    <property type="protein sequence ID" value="AAA63195.1"/>
    <property type="molecule type" value="mRNA"/>
</dbReference>
<dbReference type="EMBL" id="M84124">
    <property type="protein sequence ID" value="AAA61247.1"/>
    <property type="status" value="ALT_SEQ"/>
    <property type="molecule type" value="Genomic_DNA"/>
</dbReference>
<dbReference type="EMBL" id="M84122">
    <property type="protein sequence ID" value="AAA61247.1"/>
    <property type="status" value="JOINED"/>
    <property type="molecule type" value="Genomic_DNA"/>
</dbReference>
<dbReference type="EMBL" id="M84123">
    <property type="protein sequence ID" value="AAA61247.1"/>
    <property type="status" value="JOINED"/>
    <property type="molecule type" value="Genomic_DNA"/>
</dbReference>
<dbReference type="EMBL" id="M84125">
    <property type="protein sequence ID" value="AAA61248.1"/>
    <property type="molecule type" value="Genomic_DNA"/>
</dbReference>
<dbReference type="EMBL" id="DQ364247">
    <property type="protein sequence ID" value="ABC96771.1"/>
    <property type="molecule type" value="mRNA"/>
</dbReference>
<dbReference type="EMBL" id="AF297093">
    <property type="protein sequence ID" value="AAG30424.1"/>
    <property type="molecule type" value="Genomic_DNA"/>
</dbReference>
<dbReference type="EMBL" id="AC006985">
    <property type="protein sequence ID" value="AAF03522.2"/>
    <property type="status" value="ALT_SEQ"/>
    <property type="molecule type" value="Genomic_DNA"/>
</dbReference>
<dbReference type="EMBL" id="D87674">
    <property type="protein sequence ID" value="BAA25600.1"/>
    <property type="molecule type" value="Genomic_DNA"/>
</dbReference>
<dbReference type="CCDS" id="CCDS2510.1">
    <molecule id="P22309-1"/>
</dbReference>
<dbReference type="PIR" id="A39092">
    <property type="entry name" value="A39092"/>
</dbReference>
<dbReference type="RefSeq" id="NP_000454.1">
    <molecule id="P22309-1"/>
    <property type="nucleotide sequence ID" value="NM_000463.3"/>
</dbReference>
<dbReference type="SMR" id="P22309"/>
<dbReference type="BioGRID" id="120087">
    <property type="interactions" value="11"/>
</dbReference>
<dbReference type="ComplexPortal" id="CPX-8502">
    <molecule id="P22309-1"/>
    <property type="entry name" value="UDP-glucuronosyltransferase 1A1 complex, UGT1A1-1 variant"/>
</dbReference>
<dbReference type="ComplexPortal" id="CPX-8541">
    <molecule id="P22309-1"/>
    <property type="entry name" value="UDP-glucuronosyltransferase 1A1 complex, UGT1A1-1-UGT1A1-2 variant"/>
</dbReference>
<dbReference type="ComplexPortal" id="CPX-8552">
    <molecule id="P22309-1"/>
    <property type="entry name" value="UDP-glucuronosyltransferase 1A1 complex, UGT1A1-1-UTG1A9-1 variant"/>
</dbReference>
<dbReference type="ComplexPortal" id="CPX-8557">
    <molecule id="P22309-1"/>
    <property type="entry name" value="UDP-glucuronosyltransferase 1A1 complex, UGT1A1-1-UGT2B7 variant"/>
</dbReference>
<dbReference type="ComplexPortal" id="CPX-8560">
    <molecule id="P22309-2"/>
    <property type="entry name" value="UDP-glucuronosyltransferase 1A1 complex, UGT1A1-2-UTG1A9-1 variant"/>
</dbReference>
<dbReference type="ComplexPortal" id="CPX-8563">
    <molecule id="P22309-2"/>
    <property type="entry name" value="UDP-glucuronosyltransferase 1A1 complex, UGT1A1-2-UGT2B7 variant"/>
</dbReference>
<dbReference type="ELM" id="P22309"/>
<dbReference type="FunCoup" id="P22309">
    <property type="interactions" value="389"/>
</dbReference>
<dbReference type="IntAct" id="P22309">
    <property type="interactions" value="13"/>
</dbReference>
<dbReference type="STRING" id="9606.ENSP00000304845"/>
<dbReference type="BindingDB" id="P22309"/>
<dbReference type="ChEMBL" id="CHEMBL1287617"/>
<dbReference type="DrugBank" id="DB01048">
    <property type="generic name" value="Abacavir"/>
</dbReference>
<dbReference type="DrugBank" id="DB00316">
    <property type="generic name" value="Acetaminophen"/>
</dbReference>
<dbReference type="DrugBank" id="DB00173">
    <property type="generic name" value="Adenine"/>
</dbReference>
<dbReference type="DrugBank" id="DB03496">
    <property type="generic name" value="Alvocidib"/>
</dbReference>
<dbReference type="DrugBank" id="DB00714">
    <property type="generic name" value="Apomorphine"/>
</dbReference>
<dbReference type="DrugBank" id="DB15059">
    <property type="generic name" value="Aprocitentan"/>
</dbReference>
<dbReference type="DrugBank" id="DB12597">
    <property type="generic name" value="Asciminib"/>
</dbReference>
<dbReference type="DrugBank" id="DB01072">
    <property type="generic name" value="Atazanavir"/>
</dbReference>
<dbReference type="DrugBank" id="DB01076">
    <property type="generic name" value="Atorvastatin"/>
</dbReference>
<dbReference type="DrugBank" id="DB06626">
    <property type="generic name" value="Axitinib"/>
</dbReference>
<dbReference type="DrugBank" id="DB05015">
    <property type="generic name" value="Belinostat"/>
</dbReference>
<dbReference type="DrugBank" id="DB16703">
    <property type="generic name" value="Belumosudil"/>
</dbReference>
<dbReference type="DrugBank" id="DB12236">
    <property type="generic name" value="Bexagliflozin"/>
</dbReference>
<dbReference type="DrugBank" id="DB11799">
    <property type="generic name" value="Bictegravir"/>
</dbReference>
<dbReference type="DrugBank" id="DB11967">
    <property type="generic name" value="Binimetinib"/>
</dbReference>
<dbReference type="DrugBank" id="DB11751">
    <property type="generic name" value="Cabotegravir"/>
</dbReference>
<dbReference type="DrugBank" id="DB00564">
    <property type="generic name" value="Carbamazepine"/>
</dbReference>
<dbReference type="DrugBank" id="DB01136">
    <property type="generic name" value="Carvedilol"/>
</dbReference>
<dbReference type="DrugBank" id="DB00439">
    <property type="generic name" value="Cerivastatin"/>
</dbReference>
<dbReference type="DrugBank" id="DB00349">
    <property type="generic name" value="Clobazam"/>
</dbReference>
<dbReference type="DrugBank" id="DB14635">
    <property type="generic name" value="Curcumin sulfate"/>
</dbReference>
<dbReference type="DrugBank" id="DB08912">
    <property type="generic name" value="Dabrafenib"/>
</dbReference>
<dbReference type="DrugBank" id="DB11963">
    <property type="generic name" value="Dacomitinib"/>
</dbReference>
<dbReference type="DrugBank" id="DB09183">
    <property type="generic name" value="Dasabuvir"/>
</dbReference>
<dbReference type="DrugBank" id="DB01609">
    <property type="generic name" value="Deferasirox"/>
</dbReference>
<dbReference type="DrugBank" id="DB11943">
    <property type="generic name" value="Delafloxacin"/>
</dbReference>
<dbReference type="DrugBank" id="DB00304">
    <property type="generic name" value="Desogestrel"/>
</dbReference>
<dbReference type="DrugBank" id="DB06700">
    <property type="generic name" value="Desvenlafaxine"/>
</dbReference>
<dbReference type="DrugBank" id="DB09213">
    <property type="generic name" value="Dexibuprofen"/>
</dbReference>
<dbReference type="DrugBank" id="DB08930">
    <property type="generic name" value="Dolutegravir"/>
</dbReference>
<dbReference type="DrugBank" id="DB00470">
    <property type="generic name" value="Dronabinol"/>
</dbReference>
<dbReference type="DrugBank" id="DB12243">
    <property type="generic name" value="Edaravone"/>
</dbReference>
<dbReference type="DrugBank" id="DB00625">
    <property type="generic name" value="Efavirenz"/>
</dbReference>
<dbReference type="DrugBank" id="DB11979">
    <property type="generic name" value="Elagolix"/>
</dbReference>
<dbReference type="DrugBank" id="DB06210">
    <property type="generic name" value="Eltrombopag"/>
</dbReference>
<dbReference type="DrugBank" id="DB09101">
    <property type="generic name" value="Elvitegravir"/>
</dbReference>
<dbReference type="DrugBank" id="DB13874">
    <property type="generic name" value="Enasidenib"/>
</dbReference>
<dbReference type="DrugBank" id="DB11718">
    <property type="generic name" value="Encorafenib"/>
</dbReference>
<dbReference type="DrugBank" id="DB00530">
    <property type="generic name" value="Erlotinib"/>
</dbReference>
<dbReference type="DrugBank" id="DB11827">
    <property type="generic name" value="Ertugliflozin"/>
</dbReference>
<dbReference type="DrugBank" id="DB14575">
    <property type="generic name" value="Eslicarbazepine"/>
</dbReference>
<dbReference type="DrugBank" id="DB09119">
    <property type="generic name" value="Eslicarbazepine acetate"/>
</dbReference>
<dbReference type="DrugBank" id="DB00783">
    <property type="generic name" value="Estradiol"/>
</dbReference>
<dbReference type="DrugBank" id="DB13952">
    <property type="generic name" value="Estradiol acetate"/>
</dbReference>
<dbReference type="DrugBank" id="DB13953">
    <property type="generic name" value="Estradiol benzoate"/>
</dbReference>
<dbReference type="DrugBank" id="DB13954">
    <property type="generic name" value="Estradiol cypionate"/>
</dbReference>
<dbReference type="DrugBank" id="DB13955">
    <property type="generic name" value="Estradiol dienanthate"/>
</dbReference>
<dbReference type="DrugBank" id="DB13956">
    <property type="generic name" value="Estradiol valerate"/>
</dbReference>
<dbReference type="DrugBank" id="DB00977">
    <property type="generic name" value="Ethinylestradiol"/>
</dbReference>
<dbReference type="DrugBank" id="DB00773">
    <property type="generic name" value="Etoposide"/>
</dbReference>
<dbReference type="DrugBank" id="DB00973">
    <property type="generic name" value="Ezetimibe"/>
</dbReference>
<dbReference type="DrugBank" id="DB04953">
    <property type="generic name" value="Ezogabine"/>
</dbReference>
<dbReference type="DrugBank" id="DB04854">
    <property type="generic name" value="Febuxostat"/>
</dbReference>
<dbReference type="DrugBank" id="DB01544">
    <property type="generic name" value="Flunitrazepam"/>
</dbReference>
<dbReference type="DrugBank" id="DB00712">
    <property type="generic name" value="Flurbiprofen"/>
</dbReference>
<dbReference type="DrugBank" id="DB01095">
    <property type="generic name" value="Fluvastatin"/>
</dbReference>
<dbReference type="DrugBank" id="DB00983">
    <property type="generic name" value="Formoterol"/>
</dbReference>
<dbReference type="DrugBank" id="DB12010">
    <property type="generic name" value="Fostamatinib"/>
</dbReference>
<dbReference type="DrugBank" id="DB11796">
    <property type="generic name" value="Fostemsavir"/>
</dbReference>
<dbReference type="DrugBank" id="DB00947">
    <property type="generic name" value="Fulvestrant"/>
</dbReference>
<dbReference type="DrugBank" id="DB00695">
    <property type="generic name" value="Furosemide"/>
</dbReference>
<dbReference type="DrugBank" id="DB02703">
    <property type="generic name" value="Fusidic acid"/>
</dbReference>
<dbReference type="DrugBank" id="DB06741">
    <property type="generic name" value="Gavestinel"/>
</dbReference>
<dbReference type="DrugBank" id="DB01241">
    <property type="generic name" value="Gemfibrozil"/>
</dbReference>
<dbReference type="DrugBank" id="DB13879">
    <property type="generic name" value="Glecaprevir"/>
</dbReference>
<dbReference type="DrugBank" id="DB01067">
    <property type="generic name" value="Glipizide"/>
</dbReference>
<dbReference type="DrugBank" id="DB12471">
    <property type="generic name" value="Ibrexafungerp"/>
</dbReference>
<dbReference type="DrugBank" id="DB05039">
    <property type="generic name" value="Indacaterol"/>
</dbReference>
<dbReference type="DrugBank" id="DB00224">
    <property type="generic name" value="Indinavir"/>
</dbReference>
<dbReference type="DrugBank" id="DB00328">
    <property type="generic name" value="Indomethacin"/>
</dbReference>
<dbReference type="DrugBank" id="DB16200">
    <property type="generic name" value="Iptacopan"/>
</dbReference>
<dbReference type="DrugBank" id="DB00762">
    <property type="generic name" value="Irinotecan"/>
</dbReference>
<dbReference type="DrugBank" id="DB01026">
    <property type="generic name" value="Ketoconazole"/>
</dbReference>
<dbReference type="DrugBank" id="DB01009">
    <property type="generic name" value="Ketoprofen"/>
</dbReference>
<dbReference type="DrugBank" id="DB00598">
    <property type="generic name" value="Labetalol"/>
</dbReference>
<dbReference type="DrugBank" id="DB00555">
    <property type="generic name" value="Lamotrigine"/>
</dbReference>
<dbReference type="DrugBank" id="DB16216">
    <property type="generic name" value="Lazertinib"/>
</dbReference>
<dbReference type="DrugBank" id="DB15673">
    <property type="generic name" value="Lenacapavir"/>
</dbReference>
<dbReference type="DrugBank" id="DB12070">
    <property type="generic name" value="Letermovir"/>
</dbReference>
<dbReference type="DrugBank" id="DB00451">
    <property type="generic name" value="Levothyroxine"/>
</dbReference>
<dbReference type="DrugBank" id="DB00279">
    <property type="generic name" value="Liothyronine"/>
</dbReference>
<dbReference type="DrugBank" id="DB00455">
    <property type="generic name" value="Loratadine"/>
</dbReference>
<dbReference type="DrugBank" id="DB00678">
    <property type="generic name" value="Losartan"/>
</dbReference>
<dbReference type="DrugBank" id="DB00227">
    <property type="generic name" value="Lovastatin"/>
</dbReference>
<dbReference type="DrugBank" id="DB06077">
    <property type="generic name" value="Lumateperone"/>
</dbReference>
<dbReference type="DrugBank" id="DB00916">
    <property type="generic name" value="Metronidazole"/>
</dbReference>
<dbReference type="DrugBank" id="DB05018">
    <property type="generic name" value="Migalastat"/>
</dbReference>
<dbReference type="DrugBank" id="DB00350">
    <property type="generic name" value="Minoxidil"/>
</dbReference>
<dbReference type="DrugBank" id="DB16236">
    <property type="generic name" value="Mitapivat"/>
</dbReference>
<dbReference type="DrugBank" id="DB11763">
    <property type="generic name" value="Momelotinib"/>
</dbReference>
<dbReference type="DrugBank" id="DB00295">
    <property type="generic name" value="Morphine"/>
</dbReference>
<dbReference type="DrugBank" id="DB06510">
    <property type="generic name" value="Muraglitazar"/>
</dbReference>
<dbReference type="DrugBank" id="DB00688">
    <property type="generic name" value="Mycophenolate mofetil"/>
</dbReference>
<dbReference type="DrugBank" id="DB01024">
    <property type="generic name" value="Mycophenolic acid"/>
</dbReference>
<dbReference type="DrugBank" id="DB01183">
    <property type="generic name" value="Naloxone"/>
</dbReference>
<dbReference type="DrugBank" id="DB00704">
    <property type="generic name" value="Naltrexone"/>
</dbReference>
<dbReference type="DrugBank" id="DB08804">
    <property type="generic name" value="Nandrolone decanoate"/>
</dbReference>
<dbReference type="DrugBank" id="DB00220">
    <property type="generic name" value="Nelfinavir"/>
</dbReference>
<dbReference type="DrugBank" id="DB04868">
    <property type="generic name" value="Nilotinib"/>
</dbReference>
<dbReference type="DrugBank" id="DB09079">
    <property type="generic name" value="Nintedanib"/>
</dbReference>
<dbReference type="DrugBank" id="DB00957">
    <property type="generic name" value="Norgestimate"/>
</dbReference>
<dbReference type="DrugBank" id="DB09074">
    <property type="generic name" value="Olaparib"/>
</dbReference>
<dbReference type="DrugBank" id="DB09296">
    <property type="generic name" value="Ombitasvir"/>
</dbReference>
<dbReference type="DrugBank" id="DB11837">
    <property type="generic name" value="Osilodrostat"/>
</dbReference>
<dbReference type="DrugBank" id="DB09297">
    <property type="generic name" value="Paritaprevir"/>
</dbReference>
<dbReference type="DrugBank" id="DB06589">
    <property type="generic name" value="Pazopanib"/>
</dbReference>
<dbReference type="DrugBank" id="DB12978">
    <property type="generic name" value="Pexidartinib"/>
</dbReference>
<dbReference type="DrugBank" id="DB01174">
    <property type="generic name" value="Phenobarbital"/>
</dbReference>
<dbReference type="DrugBank" id="DB00252">
    <property type="generic name" value="Phenytoin"/>
</dbReference>
<dbReference type="DrugBank" id="DB13878">
    <property type="generic name" value="Pibrentasvir"/>
</dbReference>
<dbReference type="DrugBank" id="DB00960">
    <property type="generic name" value="Pindolol"/>
</dbReference>
<dbReference type="DrugBank" id="DB12016">
    <property type="generic name" value="Ponesimod"/>
</dbReference>
<dbReference type="DrugBank" id="DB00794">
    <property type="generic name" value="Primidone"/>
</dbReference>
<dbReference type="DrugBank" id="DB01032">
    <property type="generic name" value="Probenecid"/>
</dbReference>
<dbReference type="DrugBank" id="DB09288">
    <property type="generic name" value="Propacetamol"/>
</dbReference>
<dbReference type="DrugBank" id="DB00818">
    <property type="generic name" value="Propofol"/>
</dbReference>
<dbReference type="DrugBank" id="DB12874">
    <property type="generic name" value="Quizartinib"/>
</dbReference>
<dbReference type="DrugBank" id="DB00481">
    <property type="generic name" value="Raloxifene"/>
</dbReference>
<dbReference type="DrugBank" id="DB06817">
    <property type="generic name" value="Raltegravir"/>
</dbReference>
<dbReference type="DrugBank" id="DB08896">
    <property type="generic name" value="Regorafenib"/>
</dbReference>
<dbReference type="DrugBank" id="DB16826">
    <property type="generic name" value="Repotrectinib"/>
</dbReference>
<dbReference type="DrugBank" id="DB01045">
    <property type="generic name" value="Rifampin"/>
</dbReference>
<dbReference type="DrugBank" id="DB00503">
    <property type="generic name" value="Ritonavir"/>
</dbReference>
<dbReference type="DrugBank" id="DB12332">
    <property type="generic name" value="Rucaparib"/>
</dbReference>
<dbReference type="DrugBank" id="DB12893">
    <property type="generic name" value="Sacituzumab govitecan"/>
</dbReference>
<dbReference type="DrugBank" id="DB11689">
    <property type="generic name" value="Selumetinib"/>
</dbReference>
<dbReference type="DrugBank" id="DB09298">
    <property type="generic name" value="Silibinin"/>
</dbReference>
<dbReference type="DrugBank" id="DB00641">
    <property type="generic name" value="Simvastatin"/>
</dbReference>
<dbReference type="DrugBank" id="DB09276">
    <property type="generic name" value="Sodium aurothiomalate"/>
</dbReference>
<dbReference type="DrugBank" id="DB00398">
    <property type="generic name" value="Sorafenib"/>
</dbReference>
<dbReference type="DrugBank" id="DB12713">
    <property type="generic name" value="Sotagliflozin"/>
</dbReference>
<dbReference type="DrugBank" id="DB00870">
    <property type="generic name" value="Suprofen"/>
</dbReference>
<dbReference type="DrugBank" id="DB12020">
    <property type="generic name" value="Tecovirimat"/>
</dbReference>
<dbReference type="DrugBank" id="DB00871">
    <property type="generic name" value="Terbutaline"/>
</dbReference>
<dbReference type="DrugBank" id="DB01420">
    <property type="generic name" value="Testosterone propionate"/>
</dbReference>
<dbReference type="DrugBank" id="DB00906">
    <property type="generic name" value="Tiagabine"/>
</dbReference>
<dbReference type="DrugBank" id="DB00932">
    <property type="generic name" value="Tipranavir"/>
</dbReference>
<dbReference type="DrugBank" id="DB00193">
    <property type="generic name" value="Tramadol"/>
</dbReference>
<dbReference type="DrugBank" id="DB00197">
    <property type="generic name" value="Troglitazone"/>
</dbReference>
<dbReference type="DrugBank" id="DB15328">
    <property type="generic name" value="Ubrogepant"/>
</dbReference>
<dbReference type="DrugBank" id="DB12255">
    <property type="generic name" value="Vadadustat"/>
</dbReference>
<dbReference type="DrugBank" id="DB00313">
    <property type="generic name" value="Valproic acid"/>
</dbReference>
<dbReference type="DrugBank" id="DB15456">
    <property type="generic name" value="Vericiguat"/>
</dbReference>
<dbReference type="DrugBank" id="DB00495">
    <property type="generic name" value="Zidovudine"/>
</dbReference>
<dbReference type="DrugBank" id="DB00909">
    <property type="generic name" value="Zonisamide"/>
</dbReference>
<dbReference type="DrugCentral" id="P22309"/>
<dbReference type="GuidetoPHARMACOLOGY" id="2990"/>
<dbReference type="SwissLipids" id="SLP:000001697"/>
<dbReference type="CAZy" id="GT1">
    <property type="family name" value="Glycosyltransferase Family 1"/>
</dbReference>
<dbReference type="GlyConnect" id="1873">
    <property type="glycosylation" value="2 N-Linked glycans (1 site)"/>
</dbReference>
<dbReference type="GlyCosmos" id="P22309">
    <property type="glycosylation" value="3 sites, 2 glycans"/>
</dbReference>
<dbReference type="GlyGen" id="P22309">
    <property type="glycosylation" value="4 sites, 2 N-linked glycans (1 site), 1 O-linked glycan (1 site)"/>
</dbReference>
<dbReference type="iPTMnet" id="P22309"/>
<dbReference type="PhosphoSitePlus" id="P22309"/>
<dbReference type="BioMuta" id="UGT1A1"/>
<dbReference type="DMDM" id="136729"/>
<dbReference type="jPOST" id="P22309"/>
<dbReference type="MassIVE" id="P22309"/>
<dbReference type="PaxDb" id="9606-ENSP00000304845"/>
<dbReference type="PeptideAtlas" id="P22309"/>
<dbReference type="ProteomicsDB" id="1325"/>
<dbReference type="ProteomicsDB" id="53981">
    <molecule id="P22309-1"/>
</dbReference>
<dbReference type="Antibodypedia" id="35061">
    <property type="antibodies" value="228 antibodies from 27 providers"/>
</dbReference>
<dbReference type="DNASU" id="54658"/>
<dbReference type="Ensembl" id="ENST00000305208.10">
    <molecule id="P22309-1"/>
    <property type="protein sequence ID" value="ENSP00000304845.5"/>
    <property type="gene ID" value="ENSG00000241635.8"/>
</dbReference>
<dbReference type="Ensembl" id="ENST00000360418.4">
    <molecule id="P22309-2"/>
    <property type="protein sequence ID" value="ENSP00000353593.3"/>
    <property type="gene ID" value="ENSG00000241635.8"/>
</dbReference>
<dbReference type="GeneID" id="54658"/>
<dbReference type="KEGG" id="hsa:54658"/>
<dbReference type="MANE-Select" id="ENST00000305208.10">
    <property type="protein sequence ID" value="ENSP00000304845.5"/>
    <property type="RefSeq nucleotide sequence ID" value="NM_000463.3"/>
    <property type="RefSeq protein sequence ID" value="NP_000454.1"/>
</dbReference>
<dbReference type="AGR" id="HGNC:12530"/>
<dbReference type="CTD" id="54658"/>
<dbReference type="DisGeNET" id="54658"/>
<dbReference type="GeneCards" id="UGT1A1"/>
<dbReference type="HGNC" id="HGNC:12530">
    <property type="gene designation" value="UGT1A1"/>
</dbReference>
<dbReference type="HPA" id="ENSG00000241635">
    <property type="expression patterns" value="Group enriched (intestine, liver)"/>
</dbReference>
<dbReference type="MalaCards" id="UGT1A1"/>
<dbReference type="MIM" id="143500">
    <property type="type" value="phenotype"/>
</dbReference>
<dbReference type="MIM" id="191740">
    <property type="type" value="gene"/>
</dbReference>
<dbReference type="MIM" id="218800">
    <property type="type" value="phenotype"/>
</dbReference>
<dbReference type="MIM" id="237900">
    <property type="type" value="phenotype"/>
</dbReference>
<dbReference type="MIM" id="601816">
    <property type="type" value="phenotype"/>
</dbReference>
<dbReference type="MIM" id="606785">
    <property type="type" value="phenotype"/>
</dbReference>
<dbReference type="neXtProt" id="NX_P22309"/>
<dbReference type="OpenTargets" id="ENSG00000241635"/>
<dbReference type="Orphanet" id="79234">
    <property type="disease" value="Crigler-Najjar syndrome type 1"/>
</dbReference>
<dbReference type="Orphanet" id="79235">
    <property type="disease" value="Crigler-Najjar syndrome type 2"/>
</dbReference>
<dbReference type="Orphanet" id="2312">
    <property type="disease" value="Transient familial neonatal hyperbilirubinemia"/>
</dbReference>
<dbReference type="PharmGKB" id="PA37181"/>
<dbReference type="PharmGKB" id="PA420"/>
<dbReference type="VEuPathDB" id="HostDB:ENSG00000241635"/>
<dbReference type="eggNOG" id="KOG1192">
    <property type="taxonomic scope" value="Eukaryota"/>
</dbReference>
<dbReference type="GeneTree" id="ENSGT00940000159677"/>
<dbReference type="HOGENOM" id="CLU_012949_3_2_1"/>
<dbReference type="InParanoid" id="P22309"/>
<dbReference type="OMA" id="SFRTEIY"/>
<dbReference type="OrthoDB" id="5835829at2759"/>
<dbReference type="PAN-GO" id="P22309">
    <property type="GO annotations" value="3 GO annotations based on evolutionary models"/>
</dbReference>
<dbReference type="PhylomeDB" id="P22309"/>
<dbReference type="TreeFam" id="TF315472"/>
<dbReference type="BRENDA" id="2.4.1.17">
    <property type="organism ID" value="2681"/>
</dbReference>
<dbReference type="PathwayCommons" id="P22309"/>
<dbReference type="Reactome" id="R-HSA-156588">
    <property type="pathway name" value="Glucuronidation"/>
</dbReference>
<dbReference type="Reactome" id="R-HSA-189483">
    <property type="pathway name" value="Heme degradation"/>
</dbReference>
<dbReference type="Reactome" id="R-HSA-5579002">
    <property type="pathway name" value="Defective UGT1A1 causes hyperbilirubinemia"/>
</dbReference>
<dbReference type="Reactome" id="R-HSA-9749641">
    <property type="pathway name" value="Aspirin ADME"/>
</dbReference>
<dbReference type="Reactome" id="R-HSA-9753281">
    <property type="pathway name" value="Paracetamol ADME"/>
</dbReference>
<dbReference type="SABIO-RK" id="P22309"/>
<dbReference type="SignaLink" id="P22309"/>
<dbReference type="SIGNOR" id="P22309"/>
<dbReference type="BioGRID-ORCS" id="54658">
    <property type="hits" value="11 hits in 1034 CRISPR screens"/>
</dbReference>
<dbReference type="GenomeRNAi" id="54658"/>
<dbReference type="Pharos" id="P22309">
    <property type="development level" value="Tchem"/>
</dbReference>
<dbReference type="PRO" id="PR:P22309"/>
<dbReference type="Proteomes" id="UP000005640">
    <property type="component" value="Chromosome 2"/>
</dbReference>
<dbReference type="RNAct" id="P22309">
    <property type="molecule type" value="protein"/>
</dbReference>
<dbReference type="Bgee" id="ENSG00000241635">
    <property type="expression patterns" value="Expressed in duodenum and 66 other cell types or tissues"/>
</dbReference>
<dbReference type="ExpressionAtlas" id="P22309">
    <property type="expression patterns" value="baseline and differential"/>
</dbReference>
<dbReference type="GO" id="GO:0005783">
    <property type="term" value="C:endoplasmic reticulum"/>
    <property type="evidence" value="ECO:0000314"/>
    <property type="project" value="UniProtKB"/>
</dbReference>
<dbReference type="GO" id="GO:0034663">
    <property type="term" value="C:endoplasmic reticulum chaperone complex"/>
    <property type="evidence" value="ECO:0007669"/>
    <property type="project" value="Ensembl"/>
</dbReference>
<dbReference type="GO" id="GO:0005789">
    <property type="term" value="C:endoplasmic reticulum membrane"/>
    <property type="evidence" value="ECO:0000304"/>
    <property type="project" value="Reactome"/>
</dbReference>
<dbReference type="GO" id="GO:0048471">
    <property type="term" value="C:perinuclear region of cytoplasm"/>
    <property type="evidence" value="ECO:0007669"/>
    <property type="project" value="UniProtKB-SubCell"/>
</dbReference>
<dbReference type="GO" id="GO:0005886">
    <property type="term" value="C:plasma membrane"/>
    <property type="evidence" value="ECO:0007669"/>
    <property type="project" value="Ensembl"/>
</dbReference>
<dbReference type="GO" id="GO:0019899">
    <property type="term" value="F:enzyme binding"/>
    <property type="evidence" value="ECO:0000353"/>
    <property type="project" value="BHF-UCL"/>
</dbReference>
<dbReference type="GO" id="GO:0004857">
    <property type="term" value="F:enzyme inhibitor activity"/>
    <property type="evidence" value="ECO:0000314"/>
    <property type="project" value="BHF-UCL"/>
</dbReference>
<dbReference type="GO" id="GO:0015020">
    <property type="term" value="F:glucuronosyltransferase activity"/>
    <property type="evidence" value="ECO:0000314"/>
    <property type="project" value="UniProtKB"/>
</dbReference>
<dbReference type="GO" id="GO:0046982">
    <property type="term" value="F:protein heterodimerization activity"/>
    <property type="evidence" value="ECO:0000353"/>
    <property type="project" value="BHF-UCL"/>
</dbReference>
<dbReference type="GO" id="GO:0042803">
    <property type="term" value="F:protein homodimerization activity"/>
    <property type="evidence" value="ECO:0000314"/>
    <property type="project" value="UniProtKB"/>
</dbReference>
<dbReference type="GO" id="GO:0001972">
    <property type="term" value="F:retinoic acid binding"/>
    <property type="evidence" value="ECO:0000314"/>
    <property type="project" value="BHF-UCL"/>
</dbReference>
<dbReference type="GO" id="GO:0005496">
    <property type="term" value="F:steroid binding"/>
    <property type="evidence" value="ECO:0000314"/>
    <property type="project" value="BHF-UCL"/>
</dbReference>
<dbReference type="GO" id="GO:0006789">
    <property type="term" value="P:bilirubin conjugation"/>
    <property type="evidence" value="ECO:0000304"/>
    <property type="project" value="Reactome"/>
</dbReference>
<dbReference type="GO" id="GO:0008210">
    <property type="term" value="P:estrogen metabolic process"/>
    <property type="evidence" value="ECO:0000314"/>
    <property type="project" value="UniProtKB"/>
</dbReference>
<dbReference type="GO" id="GO:0051552">
    <property type="term" value="P:flavone metabolic process"/>
    <property type="evidence" value="ECO:0000314"/>
    <property type="project" value="BHF-UCL"/>
</dbReference>
<dbReference type="GO" id="GO:0009812">
    <property type="term" value="P:flavonoid metabolic process"/>
    <property type="evidence" value="ECO:0000314"/>
    <property type="project" value="BHF-UCL"/>
</dbReference>
<dbReference type="GO" id="GO:0045922">
    <property type="term" value="P:negative regulation of fatty acid metabolic process"/>
    <property type="evidence" value="ECO:0000250"/>
    <property type="project" value="BHF-UCL"/>
</dbReference>
<dbReference type="GO" id="GO:0045939">
    <property type="term" value="P:negative regulation of steroid metabolic process"/>
    <property type="evidence" value="ECO:0000305"/>
    <property type="project" value="BHF-UCL"/>
</dbReference>
<dbReference type="GO" id="GO:0042573">
    <property type="term" value="P:retinoic acid metabolic process"/>
    <property type="evidence" value="ECO:0000305"/>
    <property type="project" value="BHF-UCL"/>
</dbReference>
<dbReference type="GO" id="GO:0008202">
    <property type="term" value="P:steroid metabolic process"/>
    <property type="evidence" value="ECO:0000305"/>
    <property type="project" value="BHF-UCL"/>
</dbReference>
<dbReference type="GO" id="GO:0006805">
    <property type="term" value="P:xenobiotic metabolic process"/>
    <property type="evidence" value="ECO:0000314"/>
    <property type="project" value="BHF-UCL"/>
</dbReference>
<dbReference type="CDD" id="cd03784">
    <property type="entry name" value="GT1_Gtf-like"/>
    <property type="match status" value="1"/>
</dbReference>
<dbReference type="FunFam" id="3.40.50.2000:FF:000001">
    <property type="entry name" value="UDP-glucuronosyltransferase"/>
    <property type="match status" value="1"/>
</dbReference>
<dbReference type="FunFam" id="3.40.50.2000:FF:000066">
    <property type="entry name" value="UDP-glucuronosyltransferase 1-1"/>
    <property type="match status" value="1"/>
</dbReference>
<dbReference type="Gene3D" id="3.40.50.2000">
    <property type="entry name" value="Glycogen Phosphorylase B"/>
    <property type="match status" value="2"/>
</dbReference>
<dbReference type="InterPro" id="IPR050271">
    <property type="entry name" value="UDP-glycosyltransferase"/>
</dbReference>
<dbReference type="InterPro" id="IPR002213">
    <property type="entry name" value="UDP_glucos_trans"/>
</dbReference>
<dbReference type="InterPro" id="IPR035595">
    <property type="entry name" value="UDP_glycos_trans_CS"/>
</dbReference>
<dbReference type="PANTHER" id="PTHR48043">
    <property type="entry name" value="EG:EG0003.4 PROTEIN-RELATED"/>
    <property type="match status" value="1"/>
</dbReference>
<dbReference type="PANTHER" id="PTHR48043:SF161">
    <property type="entry name" value="UDP GLUCURONOSYLTRANSFERASE FAMILY 1 MEMBER A1"/>
    <property type="match status" value="1"/>
</dbReference>
<dbReference type="Pfam" id="PF00201">
    <property type="entry name" value="UDPGT"/>
    <property type="match status" value="1"/>
</dbReference>
<dbReference type="SUPFAM" id="SSF53756">
    <property type="entry name" value="UDP-Glycosyltransferase/glycogen phosphorylase"/>
    <property type="match status" value="1"/>
</dbReference>
<dbReference type="PROSITE" id="PS00375">
    <property type="entry name" value="UDPGT"/>
    <property type="match status" value="1"/>
</dbReference>
<proteinExistence type="evidence at protein level"/>
<reference key="1">
    <citation type="journal article" date="1991" name="J. Biol. Chem.">
        <title>Cloning of two human liver bilirubin UDP-glucuronosyltransferase cDNAs with expression in COS-1 cells.</title>
        <authorList>
            <person name="Ritter J.K."/>
            <person name="Crawford J.M."/>
            <person name="Owens I.S."/>
        </authorList>
    </citation>
    <scope>NUCLEOTIDE SEQUENCE [MRNA] (ISOFORM 1)</scope>
    <source>
        <tissue>Liver</tissue>
    </source>
</reference>
<reference key="2">
    <citation type="journal article" date="1992" name="J. Biol. Chem.">
        <title>A novel complex locus UGT1 encodes human bilirubin, phenol, and other UDP-glucuronosyltransferase isozymes with identical carboxyl termini.</title>
        <authorList>
            <person name="Ritter J.K."/>
            <person name="Chen F."/>
            <person name="Sheen Y.Y."/>
            <person name="Tran H.M."/>
            <person name="Kimura S."/>
            <person name="Yeatman M.T."/>
            <person name="Owens I.S."/>
        </authorList>
    </citation>
    <scope>NUCLEOTIDE SEQUENCE [GENOMIC DNA]</scope>
    <scope>TISSUE SPECIFICITY</scope>
</reference>
<reference key="3">
    <citation type="journal article" date="2001" name="Pharmacogenetics">
        <title>Thirteen UDP-glucuronosyltransferase genes are encoded at the human UGT1 gene complex locus.</title>
        <authorList>
            <person name="Gong Q.H."/>
            <person name="Cho J.W."/>
            <person name="Huang T."/>
            <person name="Potter C."/>
            <person name="Gholami N."/>
            <person name="Basu N.K."/>
            <person name="Kubota S."/>
            <person name="Carvalho S."/>
            <person name="Pennington M.W."/>
            <person name="Owens I.S."/>
            <person name="Popescu N.C."/>
        </authorList>
    </citation>
    <scope>NUCLEOTIDE SEQUENCE [GENOMIC DNA]</scope>
</reference>
<reference key="4">
    <citation type="submission" date="2006-01" db="EMBL/GenBank/DDBJ databases">
        <authorList>
            <person name="Guillemette C."/>
            <person name="Levesque E."/>
            <person name="Girard H."/>
            <person name="Bernard O."/>
        </authorList>
    </citation>
    <scope>NUCLEOTIDE SEQUENCE [MRNA] (ISOFORM 2)</scope>
</reference>
<reference key="5">
    <citation type="journal article" date="2005" name="Nature">
        <title>Generation and annotation of the DNA sequences of human chromosomes 2 and 4.</title>
        <authorList>
            <person name="Hillier L.W."/>
            <person name="Graves T.A."/>
            <person name="Fulton R.S."/>
            <person name="Fulton L.A."/>
            <person name="Pepin K.H."/>
            <person name="Minx P."/>
            <person name="Wagner-McPherson C."/>
            <person name="Layman D."/>
            <person name="Wylie K."/>
            <person name="Sekhon M."/>
            <person name="Becker M.C."/>
            <person name="Fewell G.A."/>
            <person name="Delehaunty K.D."/>
            <person name="Miner T.L."/>
            <person name="Nash W.E."/>
            <person name="Kremitzki C."/>
            <person name="Oddy L."/>
            <person name="Du H."/>
            <person name="Sun H."/>
            <person name="Bradshaw-Cordum H."/>
            <person name="Ali J."/>
            <person name="Carter J."/>
            <person name="Cordes M."/>
            <person name="Harris A."/>
            <person name="Isak A."/>
            <person name="van Brunt A."/>
            <person name="Nguyen C."/>
            <person name="Du F."/>
            <person name="Courtney L."/>
            <person name="Kalicki J."/>
            <person name="Ozersky P."/>
            <person name="Abbott S."/>
            <person name="Armstrong J."/>
            <person name="Belter E.A."/>
            <person name="Caruso L."/>
            <person name="Cedroni M."/>
            <person name="Cotton M."/>
            <person name="Davidson T."/>
            <person name="Desai A."/>
            <person name="Elliott G."/>
            <person name="Erb T."/>
            <person name="Fronick C."/>
            <person name="Gaige T."/>
            <person name="Haakenson W."/>
            <person name="Haglund K."/>
            <person name="Holmes A."/>
            <person name="Harkins R."/>
            <person name="Kim K."/>
            <person name="Kruchowski S.S."/>
            <person name="Strong C.M."/>
            <person name="Grewal N."/>
            <person name="Goyea E."/>
            <person name="Hou S."/>
            <person name="Levy A."/>
            <person name="Martinka S."/>
            <person name="Mead K."/>
            <person name="McLellan M.D."/>
            <person name="Meyer R."/>
            <person name="Randall-Maher J."/>
            <person name="Tomlinson C."/>
            <person name="Dauphin-Kohlberg S."/>
            <person name="Kozlowicz-Reilly A."/>
            <person name="Shah N."/>
            <person name="Swearengen-Shahid S."/>
            <person name="Snider J."/>
            <person name="Strong J.T."/>
            <person name="Thompson J."/>
            <person name="Yoakum M."/>
            <person name="Leonard S."/>
            <person name="Pearman C."/>
            <person name="Trani L."/>
            <person name="Radionenko M."/>
            <person name="Waligorski J.E."/>
            <person name="Wang C."/>
            <person name="Rock S.M."/>
            <person name="Tin-Wollam A.-M."/>
            <person name="Maupin R."/>
            <person name="Latreille P."/>
            <person name="Wendl M.C."/>
            <person name="Yang S.-P."/>
            <person name="Pohl C."/>
            <person name="Wallis J.W."/>
            <person name="Spieth J."/>
            <person name="Bieri T.A."/>
            <person name="Berkowicz N."/>
            <person name="Nelson J.O."/>
            <person name="Osborne J."/>
            <person name="Ding L."/>
            <person name="Meyer R."/>
            <person name="Sabo A."/>
            <person name="Shotland Y."/>
            <person name="Sinha P."/>
            <person name="Wohldmann P.E."/>
            <person name="Cook L.L."/>
            <person name="Hickenbotham M.T."/>
            <person name="Eldred J."/>
            <person name="Williams D."/>
            <person name="Jones T.A."/>
            <person name="She X."/>
            <person name="Ciccarelli F.D."/>
            <person name="Izaurralde E."/>
            <person name="Taylor J."/>
            <person name="Schmutz J."/>
            <person name="Myers R.M."/>
            <person name="Cox D.R."/>
            <person name="Huang X."/>
            <person name="McPherson J.D."/>
            <person name="Mardis E.R."/>
            <person name="Clifton S.W."/>
            <person name="Warren W.C."/>
            <person name="Chinwalla A.T."/>
            <person name="Eddy S.R."/>
            <person name="Marra M.A."/>
            <person name="Ovcharenko I."/>
            <person name="Furey T.S."/>
            <person name="Miller W."/>
            <person name="Eichler E.E."/>
            <person name="Bork P."/>
            <person name="Suyama M."/>
            <person name="Torrents D."/>
            <person name="Waterston R.H."/>
            <person name="Wilson R.K."/>
        </authorList>
    </citation>
    <scope>NUCLEOTIDE SEQUENCE [LARGE SCALE GENOMIC DNA]</scope>
</reference>
<reference key="6">
    <citation type="journal article" date="1997" name="Hepatol. Res.">
        <title>Analysis of the promoter of human bilirubin UDP-glucuronosyltransferase gene (UGT1*1) in relevance to Gilbert's syndrome.</title>
        <authorList>
            <person name="Ueyama H."/>
            <person name="Koiwai O."/>
            <person name="Soeda Y."/>
            <person name="Sato H."/>
            <person name="Satoh Y."/>
            <person name="Ohkubo I."/>
            <person name="Doida Y."/>
        </authorList>
    </citation>
    <scope>NUCLEOTIDE SEQUENCE [GENOMIC DNA] OF 1-50</scope>
</reference>
<reference key="7">
    <citation type="journal article" date="2002" name="Mol. Pharmacol.">
        <title>Common human UGT1A polymorphisms and the altered metabolism of irinotecan active metabolite 7-ethyl-10-hydroxycamptothecin (SN-38).</title>
        <authorList>
            <person name="Gagne J.F."/>
            <person name="Montminy V."/>
            <person name="Belanger P."/>
            <person name="Journault K."/>
            <person name="Gaucher G."/>
            <person name="Guillemette C."/>
        </authorList>
    </citation>
    <scope>FUNCTION (ISOFORM 1)</scope>
    <scope>CATALYTIC ACTIVITY</scope>
    <scope>BIOPHYSICOCHEMICAL PROPERTIES</scope>
    <scope>SUBSTRATE SPECIFICITY</scope>
    <scope>MUTAGENESIS OF LEU-233</scope>
    <scope>CHARACTERIZATION OF VARIANTS ARG-71; GLN-229 AND ASP-486</scope>
</reference>
<reference key="8">
    <citation type="journal article" date="2004" name="J. Clin. Endocrinol. Metab.">
        <title>Specificity and regioselectivity of the conjugation of estradiol, estrone, and their catecholestrogen and methoxyestrogen metabolites by human uridine diphospho-glucuronosyltransferases expressed in endometrium.</title>
        <authorList>
            <person name="Lepine J."/>
            <person name="Bernard O."/>
            <person name="Plante M."/>
            <person name="Tetu B."/>
            <person name="Pelletier G."/>
            <person name="Labrie F."/>
            <person name="Belanger A."/>
            <person name="Guillemette C."/>
        </authorList>
    </citation>
    <scope>FUNCTION (ISOFORM 1)</scope>
    <scope>CATALYTIC ACTIVITY</scope>
    <scope>BIOPHYSICOCHEMICAL PROPERTIES</scope>
</reference>
<reference key="9">
    <citation type="journal article" date="2005" name="Drug Metab. Dispos.">
        <title>Identification of the UDP-glucuronosyltransferase isoforms involved in mycophenolic acid phase II metabolism.</title>
        <authorList>
            <person name="Picard N."/>
            <person name="Ratanasavanh D."/>
            <person name="Premaud A."/>
            <person name="Le Meur Y."/>
            <person name="Marquet P."/>
        </authorList>
    </citation>
    <scope>BIOPHYSICOCHEMICAL PROPERTIES</scope>
</reference>
<reference key="10">
    <citation type="journal article" date="2006" name="Drug Metab. Dispos.">
        <title>Human UDP-glucuronosyltransferase, UGT1A8, glucuronidates dihydrotestosterone to a monoglucuronide and further to a structurally novel diglucuronide.</title>
        <authorList>
            <person name="Murai T."/>
            <person name="Samata N."/>
            <person name="Iwabuchi H."/>
            <person name="Ikeda T."/>
        </authorList>
    </citation>
    <scope>FUNCTION (ISOFORM 1)</scope>
    <scope>BIOPHYSICOCHEMICAL PROPERTIES</scope>
</reference>
<reference key="11">
    <citation type="journal article" date="2007" name="Pharmacogenet. Genomics">
        <title>Molecular pathogenesis of Gilbert's syndrome: decreased TATA-binding protein binding affinity of UGT1A1 gene promoter.</title>
        <authorList>
            <person name="Hsieh T.Y."/>
            <person name="Shiu T.Y."/>
            <person name="Huang S.M."/>
            <person name="Lin H.H."/>
            <person name="Lee T.C."/>
            <person name="Chen P.J."/>
            <person name="Chu H.C."/>
            <person name="Chang W.K."/>
            <person name="Jeng K.S."/>
            <person name="Lai M.M."/>
            <person name="Chao Y.C."/>
        </authorList>
    </citation>
    <scope>INVOLVEMENT IN GILBS</scope>
</reference>
<reference key="12">
    <citation type="journal article" date="2007" name="Mol. Pharm.">
        <title>Disposition of flavonoids via enteric recycling: enzyme stability affects characterization of prunetin glucuronidation across species, organs, and UGT isoforms.</title>
        <authorList>
            <person name="Joseph T.B."/>
            <person name="Wang S.W."/>
            <person name="Liu X."/>
            <person name="Kulkarni K.H."/>
            <person name="Wang J."/>
            <person name="Xu H."/>
            <person name="Hu M."/>
        </authorList>
    </citation>
    <scope>FUNCTION (ISOFORM 1)</scope>
    <scope>CATALYTIC ACTIVITY</scope>
    <scope>BIOPHYSICOCHEMICAL PROPERTIES</scope>
</reference>
<reference key="13">
    <citation type="journal article" date="2007" name="Hepatology">
        <title>Regulation of the UGT1A1 bilirubin-conjugating pathway: role of a new splicing event at the UGT1A locus.</title>
        <authorList>
            <person name="Levesque E."/>
            <person name="Girard H."/>
            <person name="Journault K."/>
            <person name="Lepine J."/>
            <person name="Guillemette C."/>
        </authorList>
    </citation>
    <scope>ALTERNATIVE SPLICING</scope>
    <scope>FUNCTION (ISOFORM 2)</scope>
    <scope>SUBCELLULAR LOCATION</scope>
    <scope>SUBUNIT</scope>
    <scope>TISSUE SPECIFICITY</scope>
</reference>
<reference key="14">
    <citation type="journal article" date="2007" name="J. Biol. Chem.">
        <title>Oligomerization of the UDP-glucuronosyltransferase 1A proteins: homo- and heterodimerization analysis by fluorescence resonance energy transfer and co-immunoprecipitation.</title>
        <authorList>
            <person name="Operana T.N."/>
            <person name="Tukey R.H."/>
        </authorList>
    </citation>
    <scope>SUBUNIT</scope>
    <scope>SUBCELLULAR LOCATION</scope>
</reference>
<reference key="15">
    <citation type="journal article" date="2007" name="Pharmacogenet. Genomics">
        <title>Influence of mutations associated with Gilbert and Crigler-Najjar type II syndromes on the glucuronidation kinetics of bilirubin and other UDP-glucuronosyltransferase 1A substrates.</title>
        <authorList>
            <person name="Udomuksorn W."/>
            <person name="Elliot D.J."/>
            <person name="Lewis B.C."/>
            <person name="Mackenzie P.I."/>
            <person name="Yoovathaworn K."/>
            <person name="Miners J.O."/>
        </authorList>
    </citation>
    <scope>FUNCTION (ISOFORM 1)</scope>
    <scope>CATALYTIC ACTIVITY</scope>
    <scope>KINETIC PARAMETERS</scope>
    <scope>SUBSTRATE SPECIFICITY</scope>
    <scope>CHARACTERIZATION OF VARIANTS CN2 ARG-71; LEU-83; GLN-229 AND ASP-486</scope>
</reference>
<reference key="16">
    <citation type="journal article" date="2007" name="Pharmacogenet. Genomics">
        <title>Genetic diversity at the UGT1 locus is amplified by a novel 3' alternative splicing mechanism leading to nine additional UGT1A proteins that act as regulators of glucuronidation activity.</title>
        <authorList>
            <person name="Girard H."/>
            <person name="Levesque E."/>
            <person name="Bellemare J."/>
            <person name="Journault K."/>
            <person name="Caillier B."/>
            <person name="Guillemette C."/>
        </authorList>
    </citation>
    <scope>FUNCTION (ISOFORMS 1 AND 2)</scope>
    <scope>ALTERNATIVE SPLICING</scope>
    <scope>CATALYTIC ACTIVITY</scope>
    <scope>TISSUE SPECIFICITY</scope>
</reference>
<reference key="17">
    <citation type="journal article" date="2008" name="Biochem. Pharmacol.">
        <title>The human UDP-glucuronosyltransferase UGT1A3 is highly selective towards N2 in the tetrazole ring of losartan, candesartan, and zolarsartan.</title>
        <authorList>
            <person name="Alonen A."/>
            <person name="Finel M."/>
            <person name="Kostiainen R."/>
        </authorList>
    </citation>
    <scope>FUNCTION (ISOFORM 1)</scope>
    <scope>CATALYTIC ACTIVITY</scope>
    <scope>BIOPHYSICOCHEMICAL PROPERTIES</scope>
</reference>
<reference key="18">
    <citation type="journal article" date="2008" name="Drug Metab. Dispos.">
        <title>The configuration of the 17-hydroxy group variably influences the glucuronidation of beta-estradiol and epiestradiol by human UDP-glucuronosyltransferases.</title>
        <authorList>
            <person name="Itaeaho K."/>
            <person name="Mackenzie P.I."/>
            <person name="Ikushiro S."/>
            <person name="Miners J.O."/>
            <person name="Finel M."/>
        </authorList>
    </citation>
    <scope>FUNCTION (ISOFORM 1)</scope>
    <scope>CATALYTIC ACTIVITY</scope>
    <scope>BIOPHYSICOCHEMICAL PROPERTIES</scope>
    <scope>SUBSTRATE SPECIFICITY</scope>
</reference>
<reference key="19">
    <citation type="journal article" date="2009" name="Mol. Pharm.">
        <title>Structure and concentration changes affect characterization of UGT isoform-specific metabolism of isoflavones.</title>
        <authorList>
            <person name="Tang L."/>
            <person name="Singh R."/>
            <person name="Liu Z."/>
            <person name="Hu M."/>
        </authorList>
    </citation>
    <scope>FUNCTION (ISOFORM 1)</scope>
</reference>
<reference key="20">
    <citation type="journal article" date="2009" name="Hum. Mol. Genet.">
        <title>Genome-wide association meta-analysis for total serum bilirubin levels.</title>
        <authorList>
            <person name="Johnson A.D."/>
            <person name="Kavousi M."/>
            <person name="Smith A.V."/>
            <person name="Chen M.H."/>
            <person name="Dehghan A."/>
            <person name="Aspelund T."/>
            <person name="Lin J.P."/>
            <person name="van Duijn C.M."/>
            <person name="Harris T.B."/>
            <person name="Cupples L.A."/>
            <person name="Uitterlinden A.G."/>
            <person name="Launer L."/>
            <person name="Hofman A."/>
            <person name="Rivadeneira F."/>
            <person name="Stricker B."/>
            <person name="Yang Q."/>
            <person name="O'Donnell C.J."/>
            <person name="Gudnason V."/>
            <person name="Witteman J.C."/>
        </authorList>
    </citation>
    <scope>INVOLVEMENT IN BILIQTL1</scope>
</reference>
<reference key="21">
    <citation type="journal article" date="2009" name="J. Proteome Res.">
        <title>Glycoproteomics analysis of human liver tissue by combination of multiple enzyme digestion and hydrazide chemistry.</title>
        <authorList>
            <person name="Chen R."/>
            <person name="Jiang X."/>
            <person name="Sun D."/>
            <person name="Han G."/>
            <person name="Wang F."/>
            <person name="Ye M."/>
            <person name="Wang L."/>
            <person name="Zou H."/>
        </authorList>
    </citation>
    <scope>GLYCOSYLATION [LARGE SCALE ANALYSIS] AT ASN-102</scope>
    <source>
        <tissue>Liver</tissue>
    </source>
</reference>
<reference key="22">
    <citation type="journal article" date="2010" name="Drug Metab. Dispos.">
        <title>Alternatively spliced products of the UGT1A gene interact with the enzymatically active proteins to inhibit glucuronosyltransferase activity in vitro.</title>
        <authorList>
            <person name="Bellemare J."/>
            <person name="Rouleau M."/>
            <person name="Girard H."/>
            <person name="Harvey M."/>
            <person name="Guillemette C."/>
        </authorList>
    </citation>
    <scope>FUNCTION (ISOFORMS 1 AND 2)</scope>
    <scope>SUBUNITS</scope>
</reference>
<reference key="23">
    <citation type="journal article" date="2004" name="J. Lipid Res.">
        <title>Glucuronidation of oxidized fatty acids and prostaglandins B1 and E2 by human hepatic and recombinant UDP-glucuronosyltransferases.</title>
        <authorList>
            <person name="Little J.M."/>
            <person name="Kurkela M."/>
            <person name="Sonka J."/>
            <person name="Jaentti S."/>
            <person name="Ketola R."/>
            <person name="Bratton S."/>
            <person name="Finel M."/>
            <person name="Radominska-Pandya A."/>
        </authorList>
    </citation>
    <scope>FUNCTION</scope>
    <scope>CATALYTIC ACTIVITY</scope>
    <scope>BIOPHYSICOCHEMICAL PROPERTIES</scope>
</reference>
<reference key="24">
    <citation type="journal article" date="2011" name="Drug Metab. Pharmacokinet.">
        <title>Identification of the human UDP-glucuronosyltransferase isoforms involved in the glucuronidation of the phytochemical ferulic acid.</title>
        <authorList>
            <person name="Li X."/>
            <person name="Shang L."/>
            <person name="Wu Y."/>
            <person name="Abbas S."/>
            <person name="Li D."/>
            <person name="Netter P."/>
            <person name="Ouzzine M."/>
            <person name="Wang H."/>
            <person name="Magdalou J."/>
        </authorList>
    </citation>
    <scope>FUNCTION</scope>
    <scope>CATALYTIC ACTIVITY</scope>
    <scope>BIOPHYSICOCHEMICAL PROPERTIES</scope>
</reference>
<reference key="25">
    <citation type="journal article" date="2013" name="Drug Metab. Dispos.">
        <title>Regiospecificity and stereospecificity of human UDP-glucuronosyltransferases in the glucuronidation of estriol, 16-epiestriol, 17-epiestriol, and 13-epiestradiol.</title>
        <authorList>
            <person name="Sneitz N."/>
            <person name="Vahermo M."/>
            <person name="Mosorin J."/>
            <person name="Laakkonen L."/>
            <person name="Poirier D."/>
            <person name="Finel M."/>
        </authorList>
    </citation>
    <scope>FUNCTION (ISOFORM 1)</scope>
    <scope>CATALYTIC ACTIVITY</scope>
    <scope>BIOPHYSICOCHEMICAL PROPERTIES</scope>
    <scope>SUBSTRATE SPECIFICITY</scope>
</reference>
<reference key="26">
    <citation type="journal article" date="2014" name="J. Pharm. Biomed. Anal.">
        <title>Simultaneous determination of bilirubin and its glucuronides in liver microsomes and recombinant UGT1A1 enzyme incubation systems by HPLC method and its application to bilirubin glucuronidation studies.</title>
        <authorList>
            <person name="Ma G."/>
            <person name="Lin J."/>
            <person name="Cai W."/>
            <person name="Tan B."/>
            <person name="Xiang X."/>
            <person name="Zhang Y."/>
            <person name="Zhang P."/>
        </authorList>
    </citation>
    <scope>FUNCTION</scope>
    <scope>CATALYTIC ACTIVITY</scope>
</reference>
<reference key="27">
    <citation type="journal article" date="2014" name="J. Proteomics">
        <title>An enzyme assisted RP-RPLC approach for in-depth analysis of human liver phosphoproteome.</title>
        <authorList>
            <person name="Bian Y."/>
            <person name="Song C."/>
            <person name="Cheng K."/>
            <person name="Dong M."/>
            <person name="Wang F."/>
            <person name="Huang J."/>
            <person name="Sun D."/>
            <person name="Wang L."/>
            <person name="Ye M."/>
            <person name="Zou H."/>
        </authorList>
    </citation>
    <scope>IDENTIFICATION BY MASS SPECTROMETRY [LARGE SCALE ANALYSIS]</scope>
    <source>
        <tissue>Liver</tissue>
    </source>
</reference>
<reference key="28">
    <citation type="journal article" date="2024" name="Redox Biol.">
        <title>Identification of novel F2-isoprostane metabolites by specific UDP-glucuronosyltransferases.</title>
        <authorList>
            <person name="Milne G.L."/>
            <person name="Nogueira M.S."/>
            <person name="Gao B."/>
            <person name="Sanchez S.C."/>
            <person name="Amin W."/>
            <person name="Thomas S."/>
            <person name="Oger C."/>
            <person name="Galano J.M."/>
            <person name="Murff H.J."/>
            <person name="Yang G."/>
            <person name="Durand T."/>
        </authorList>
    </citation>
    <scope>FUNCTION</scope>
    <scope>CATALYTIC ACTIVITY</scope>
</reference>
<reference key="29">
    <citation type="journal article" date="1992" name="FASEB J.">
        <title>Mechanisms of inherited deficiencies of multiple UDP-glucuronosyltransferase isoforms in two patients with Crigler-Najjar syndrome, type I.</title>
        <authorList>
            <person name="Bosma P.J."/>
            <person name="Chowdhury J.R."/>
            <person name="Huang T.-J."/>
            <person name="Lahiri P."/>
            <person name="Elferink R.P.J.O."/>
            <person name="van Es H.H.G."/>
            <person name="Lederstein M."/>
            <person name="Whitington P.F."/>
            <person name="Jansen P.L.M."/>
            <person name="Chowdhury N.R."/>
        </authorList>
    </citation>
    <scope>VARIANT CN1 PHE-375</scope>
</reference>
<reference key="30">
    <citation type="journal article" date="1993" name="Biochem. Biophys. Res. Commun.">
        <title>Identification of defect in the genes for bilirubin UDP-glucuronosyl-transferase in a patient with Crigler-Najjar syndrome type II.</title>
        <authorList>
            <person name="Aono S."/>
            <person name="Yamada Y."/>
            <person name="Keino H."/>
            <person name="Hanada N."/>
            <person name="Nakagawa T."/>
            <person name="Sasaoka Y."/>
            <person name="Yazawa T."/>
            <person name="Sato H."/>
            <person name="Koiwai O."/>
        </authorList>
    </citation>
    <scope>VARIANTS CN2 ARG-71 AND ASP-486</scope>
</reference>
<reference key="31">
    <citation type="journal article" date="1993" name="Genomics">
        <title>Identification of an A-to-G missense mutation in exon 2 of the UGT1 gene complex that causes Crigler-Najjar syndrome type 2.</title>
        <authorList>
            <person name="Moghrabi N."/>
            <person name="Clarke D.J."/>
            <person name="Boxer M."/>
            <person name="Burchell B."/>
        </authorList>
    </citation>
    <scope>VARIANT CN2 ARG-331</scope>
</reference>
<reference key="32">
    <citation type="journal article" date="1993" name="J. Biol. Chem.">
        <title>A phenylalanine codon deletion at the UGT1 gene complex locus of a Crigler-Najjar type I patient generates a pH-sensitive bilirubin UDP-glucuronosyltransferase.</title>
        <authorList>
            <person name="Ritter J.K."/>
            <person name="Yeatman M.T."/>
            <person name="Kaiser C."/>
            <person name="Gridelli B."/>
            <person name="Owens I.S."/>
        </authorList>
    </citation>
    <scope>VARIANT CN1 PHE-170 DEL</scope>
</reference>
<reference key="33">
    <citation type="journal article" date="1994" name="Hum. Genet.">
        <title>Genetic heterogeneity of Crigler-Najjar syndrome type I: a study of 14 cases.</title>
        <authorList>
            <person name="Labrune P."/>
            <person name="Myara A."/>
            <person name="Hadchouel M."/>
            <person name="Ronchi F."/>
            <person name="Bernard O."/>
            <person name="Trivin F."/>
            <person name="Roy Chowdhury N."/>
            <person name="Roy Chowdhury J."/>
            <person name="Munnich A."/>
            <person name="Odievre M."/>
        </authorList>
    </citation>
    <scope>VARIANTS CN1 VAL-292; GLU-308; ARG-357; THR-368; ARG-381; PRO-401 AND GLU-428</scope>
</reference>
<reference key="34">
    <citation type="journal article" date="1994" name="J. Clin. Invest.">
        <title>Identification of two single base substitutions in the UGT1 gene locus which abolish bilirubin uridine diphosphate glucuronosyltransferase activity in vitro.</title>
        <authorList>
            <person name="Erps L.T."/>
            <person name="Ritter J.K."/>
            <person name="Hersh J.H."/>
            <person name="Blossom D."/>
            <person name="Martin N.C."/>
            <person name="Owens I.S."/>
        </authorList>
    </citation>
    <scope>VARIANTS CN1 GLU-308 AND PHE-375</scope>
    <scope>CHARACTERIZATION OF VARIANTS CN1 GLU-308 AND PHE-375</scope>
</reference>
<reference key="35">
    <citation type="journal article" date="1994" name="J. Clin. Invest.">
        <title>Discrimination between Crigler-Najjar type I and II by expression of mutant bilirubin uridine diphosphate-glucuronosyltransferase.</title>
        <authorList>
            <person name="Seppen J."/>
            <person name="Bosma P.J."/>
            <person name="Goldhoorn B.G."/>
            <person name="Bakker C.T.M."/>
            <person name="Roy Chowdhury J."/>
            <person name="Roy Chowdhury N."/>
            <person name="Jansen P.L.M."/>
            <person name="Oude Elferink R.P.J."/>
        </authorList>
    </citation>
    <scope>VARIANTS CN1 PHE-170 DEL; ARG-177; ARG-276 AND PHE-375</scope>
    <scope>VARIANTS CN2 GLN-175 AND TRP-209</scope>
</reference>
<reference key="36">
    <citation type="journal article" date="1995" name="Lancet">
        <title>Analysis of genes for bilirubin UDP-glucuronosyltransferase in Gilbert's syndrome.</title>
        <authorList>
            <person name="Aono S."/>
            <person name="Adachi Y."/>
            <person name="Uyama E."/>
            <person name="Yamada Y."/>
            <person name="Keino H."/>
            <person name="Nanno T."/>
            <person name="Koiwai O."/>
            <person name="Sato H."/>
        </authorList>
    </citation>
    <scope>VARIANTS GILBS ARG-71; GLN-229 AND GLY-367</scope>
    <scope>INVOLVEMENT IN GILBS</scope>
    <source>
        <tissue>Liver</tissue>
        <tissue>Peripheral blood leukocyte</tissue>
    </source>
</reference>
<reference key="37">
    <citation type="journal article" date="1996" name="FEBS Lett.">
        <title>A mutation which disrupts the hydrophobic core of the signal peptide of bilirubin UDP-glucuronosyltransferase, an endoplasmic reticulum membrane protein, causes Crigler-Najjar type II.</title>
        <authorList>
            <person name="Seppen J."/>
            <person name="Steenken E."/>
            <person name="Lindhout D."/>
            <person name="Bosma P.J."/>
            <person name="Oude Elferink R.P.J."/>
        </authorList>
    </citation>
    <scope>VARIANT CN2 ARG-15</scope>
    <scope>CHARACTERIZATION OF VARIANT CN2 ARG-15</scope>
</reference>
<reference key="38">
    <citation type="journal article" date="1998" name="Biochim. Biophys. Acta">
        <title>Coding defect and a TATA box mutation at the bilirubin UDP-glucuronosyltransferase gene cause Crigler-Najjar type I disease.</title>
        <authorList>
            <person name="Ciotti M."/>
            <person name="Chen F."/>
            <person name="Rubaltelli F.F."/>
            <person name="Owens I.S."/>
        </authorList>
    </citation>
    <scope>VARIANT CN2 THR-294</scope>
    <scope>CHARACTERIZATION OF VARIANT CN2 THR-294</scope>
</reference>
<reference key="39">
    <citation type="journal article" date="1998" name="J. Hum. Genet.">
        <title>Analysis of bilirubin uridine 5'-diphosphate (UDP)-glucuronosyltransferase gene mutations in seven patients with Crigler-Najjar syndrome type II.</title>
        <authorList>
            <person name="Yamamoto K."/>
            <person name="Soeda Y."/>
            <person name="Kamisako T."/>
            <person name="Hosaka H."/>
            <person name="Fukano M."/>
            <person name="Sato H."/>
            <person name="Fujiyama Y."/>
            <person name="Dachi Y."/>
            <person name="Satoh Y."/>
            <person name="Bamba T."/>
        </authorList>
    </citation>
    <scope>VARIANTS CN2 ARG-71; TRP-209; GLN-229 AND ASP-486</scope>
</reference>
<reference key="40">
    <citation type="journal article" date="1998" name="J. Pediatr.">
        <title>Gilbert syndrome caused by a homozygous missense mutation (Tyr486Asp) of bilirubin UDP-glucuronosyltransferase gene.</title>
        <authorList>
            <person name="Maruo Y."/>
            <person name="Sato H."/>
            <person name="Yamano T."/>
            <person name="Doida Y."/>
            <person name="Shimada M."/>
        </authorList>
    </citation>
    <scope>VARIANT GILBS ASP-486</scope>
</reference>
<reference key="41">
    <citation type="journal article" date="2000" name="Hum. Mutat.">
        <title>Genetic lesions of bilirubin uridine-diphosphoglucuronate glucuronosyltransferase (UGT1A1) causing Crigler-Najjar and Gilbert syndromes: correlation of genotype to phenotype.</title>
        <authorList>
            <person name="Kadakol A."/>
            <person name="Ghosh S.S."/>
            <person name="Sappal B.S."/>
            <person name="Sharma G."/>
            <person name="Chowdhury J.R."/>
            <person name="Chowdhury N.R."/>
        </authorList>
    </citation>
    <scope>VARIANTS CN1 ASP-39; PHE-170 DEL; ARG-177; ARG-276; VAL-291; GLU-308; TRP-336; ARG-357; THR-368; PHE-375; ARG-376; ARG-381; SER-387; PRO-401 AND GLU-428</scope>
    <scope>VARIANTS CN2 ARG-15; GLN-175; TRP-209; GLY-225; ARG-331 AND ARG-376</scope>
    <scope>VARIANTS GILBS ARG-71; GLN-229; THR-294; GLY-367 AND ASP-486</scope>
</reference>
<reference key="42">
    <citation type="journal article" date="2000" name="Pediatrics">
        <title>Prolonged unconjugated hyperbilirubinemia associated with breast milk and mutations of the bilirubin uridine diphosphate-glucuronosyltransferase gene.</title>
        <authorList>
            <person name="Maruo Y."/>
            <person name="Nishizawa K."/>
            <person name="Sato H."/>
            <person name="Sawa H."/>
            <person name="Shimada M."/>
        </authorList>
    </citation>
    <scope>VARIANTS HBLRTFN ARG-71 AND ASP-486</scope>
</reference>
<reference key="43">
    <citation type="journal article" date="2001" name="J. Med. Genet.">
        <title>Interaction of coding region mutations and the Gilbert-type promoter abnormality of the UGT1A1 gene causes moderate degrees of unconjugated hyperbilirubinaemia and may lead to neonatal kernicterus.</title>
        <authorList>
            <person name="Kadakol A."/>
            <person name="Sappal B.S."/>
            <person name="Ghosh S.S."/>
            <person name="Lowenheim M."/>
            <person name="Chowdhury A."/>
            <person name="Chowdhury S."/>
            <person name="Santra A."/>
            <person name="Arias I.M."/>
            <person name="Chowdhury J.R."/>
            <person name="Chowdhury N.R."/>
        </authorList>
    </citation>
    <scope>VARIANT CN2 GLN-175</scope>
</reference>
<reference key="44">
    <citation type="journal article" date="2002" name="Hum. Mutat.">
        <title>Association of a homozygous (TA)8 promoter polymorphism and a N400D mutation of UGT1A1 in a child with Crigler-Najjar type II syndrome.</title>
        <authorList>
            <person name="Labrune P."/>
            <person name="Myara A."/>
            <person name="Chalas J."/>
            <person name="Le Bihan B."/>
            <person name="Capel L."/>
            <person name="Francoual J."/>
        </authorList>
    </citation>
    <scope>VARIANT CN2 ASP-400</scope>
</reference>
<reference key="45">
    <citation type="journal article" date="2002" name="Pediatr. Int.">
        <title>Novel missense mutation of the UGT1A1 gene in Thai siblings with Gilbert's syndrome.</title>
        <authorList>
            <person name="Sutomo R."/>
            <person name="Laosombat V."/>
            <person name="Sadewa A.H."/>
            <person name="Yokoyama N."/>
            <person name="Nakamura H."/>
            <person name="Matsuo M."/>
            <person name="Nishio H."/>
        </authorList>
    </citation>
    <scope>VARIANT GILBS LEU-83</scope>
</reference>
<reference key="46">
    <citation type="journal article" date="2003" name="Biochem. Biophys. Res. Commun.">
        <title>Rapid proteasomal degradation of translocation-deficient UDP-glucuronosyltransferase 1A1 proteins in patients with Crigler-Najjar type II.</title>
        <authorList>
            <person name="Ohnishi A."/>
            <person name="Emi Y."/>
        </authorList>
    </citation>
    <scope>CHARACTERIZATION OF VARIANT CN2 ARG-15</scope>
</reference>
<reference key="47">
    <citation type="journal article" date="2005" name="Hum. Mutat.">
        <title>Spectrum of UGT1A1 mutations in Crigler-Najjar (CN) syndrome patients: identification of twelve novel alleles and genotype-phenotype correlation.</title>
        <authorList>
            <person name="Servedio V."/>
            <person name="d'Apolito M."/>
            <person name="Maiorano N."/>
            <person name="Minuti B."/>
            <person name="Torricelli F."/>
            <person name="Ronchi F."/>
            <person name="Zancan L."/>
            <person name="Perrotta S."/>
            <person name="Vajro P."/>
            <person name="Boschetto L."/>
            <person name="Iolascon A."/>
        </authorList>
    </citation>
    <scope>VARIANTS CN1 GLN-336; ARG-357; PHE-375; SER-387 AND VAL-395</scope>
    <scope>VARIANTS CN2 GLN-34; PHE-170 DEL; TRP-209; GLY-225; LEU-336; TRP-336; ARG-354; CYS-403 AND ASP-478</scope>
    <scope>VARIANTS CN1/CN2 VAL-377 AND ARG-461</scope>
</reference>
<reference key="48">
    <citation type="journal article" date="2007" name="Haematologica">
        <title>Seven novel mutations of the UGT1A1 gene in patients with unconjugated hyperbilirubinemia.</title>
        <authorList>
            <person name="D'Apolito M."/>
            <person name="Marrone A."/>
            <person name="Servedio V."/>
            <person name="Vajro P."/>
            <person name="De Falco L."/>
            <person name="Iolascon A."/>
        </authorList>
    </citation>
    <scope>VARIANT CN1 PHE-171 DEL</scope>
    <scope>VARIANTS CN2 TYR-279; ARG-354; VAL-370; VAL-395; PRO-443 AND ARG-461</scope>
</reference>
<reference key="49">
    <citation type="journal article" date="2010" name="Hum. Mutat.">
        <title>Crigler-Najjar syndrome in The Netherlands: identification of four novel UGT1A1 alleles, genotype-phenotype correlation, and functional analysis of 10 missense mutants.</title>
        <authorList>
            <person name="Sneitz N."/>
            <person name="Bakker C.T."/>
            <person name="de Knegt R.J."/>
            <person name="Halley D.J."/>
            <person name="Finel M."/>
            <person name="Bosma P.J."/>
        </authorList>
    </citation>
    <scope>VARIANT CN1 THR-402</scope>
    <scope>VARIANTS CN2 ARG-15; ARG-71; PHE-191; TRP-209; TRP-336; HIS-387; PRO-443 AND ASP-486</scope>
    <scope>CHARACTERIZATION OF VARIANT CN1 THR-402</scope>
    <scope>CHARACTERIZATION OF VARIANTS CN2 ARG-71; GLN-175; PHE-191; TRP-209; ARG-331; TRP-336; HIS-387; VAL-395 AND PRO-443</scope>
    <scope>CATALYTIC ACTIVITY</scope>
    <scope>FUNCTION</scope>
    <scope>SUBSTRATE SPECIFICITY</scope>
</reference>
<reference key="50">
    <citation type="journal article" date="2013" name="Ann. Hum. Genet.">
        <title>UGT1A1 gene mutations in Pakistani children suffering from inherited nonhemolytic unconjugated hyperbilirubinemias.</title>
        <authorList>
            <person name="Khan S."/>
            <person name="Irfan M."/>
            <person name="Sher G."/>
            <person name="Zubaida B."/>
            <person name="Alvi M.A."/>
            <person name="Yasinzai M."/>
            <person name="Naeem M."/>
        </authorList>
    </citation>
    <scope>VARIANT CN1 ASN-36</scope>
    <scope>VARIANT CN2 CYS-230</scope>
</reference>
<reference key="51">
    <citation type="journal article" date="2013" name="Clin. Biochem.">
        <title>Identification of a novel mutation in UDP-glucuronosyltransferase (UGT1A1) gene in a child with neonatal unconjugated hyperbilirubinemia.</title>
        <authorList>
            <person name="Minucci A."/>
            <person name="Canu G."/>
            <person name="Gentile L."/>
            <person name="Cimino V."/>
            <person name="Giardina B."/>
            <person name="Zuppi C."/>
            <person name="Capoluongo E."/>
        </authorList>
    </citation>
    <scope>VARIANTS CN2 PHE-170 DEL AND CYS-367</scope>
</reference>
<comment type="function">
    <molecule>Isoform 1</molecule>
    <text evidence="6 10 12 17 20 21 22 23 24 27 28 29 30 32 34 35">UDP-glucuronosyltransferase (UGT) that catalyzes phase II biotransformation reactions in which lipophilic substrates are conjugated with glucuronic acid to increase the metabolite's water solubility, thereby facilitating excretion into either the urine or bile (PubMed:12181437, PubMed:15472229, PubMed:18004206, PubMed:18004212, PubMed:18719240, PubMed:19830808, PubMed:23288867, PubMed:15231852, PubMed:21422672, PubMed:38211441). Essential for the elimination and detoxification of drugs, xenobiotics and endogenous compounds (PubMed:12181437, PubMed:18004206, PubMed:18004212). Catalyzes the glucuronidation of endogenous estrogen hormones such as estradiol, estrone and estriol (PubMed:15472229, PubMed:18719240, PubMed:23288867). Involved in the glucuronidation of bilirubin, a degradation product occurring in the normal catabolic pathway that breaks down heme in vertebrates (PubMed:17187418, PubMed:18004206, PubMed:19830808, PubMed:24525562). Involved in the glucuronidation of arachidonic acid (AA) and AA-derived eicosanoids including 15-HETE, 20-HETE, PGB1 and F2-isoprostane (8-iso-PGF2alpha) (PubMed:15231852, PubMed:38211441). Involved in the glucuronidation of the phytochemical ferulic acid at the phenolic or the carboxylic acid group (PubMed:21422672). Also catalyzes the glucuronidation the isoflavones genistein, daidzein, glycitein, formononetin, biochanin A and prunetin, which are phytoestrogens with anticancer and cardiovascular properties (PubMed:18052087, PubMed:19545173). Involved in the glucuronidation of the AGTR1 angiotensin receptor antagonist losartan, a drug which can inhibit the effect of angiotensin II (PubMed:18674515). Involved in the biotransformation of 7-ethyl-10-hydroxycamptothecin (SN-38), the pharmacologically active metabolite of the anticancer drug irinotecan (PubMed:12181437, PubMed:18004212, PubMed:20610558).</text>
</comment>
<comment type="function">
    <molecule>Isoform 2</molecule>
    <text evidence="17 21 29">Lacks UGT glucuronidation activity but acts as a negative regulator of isoform 1.</text>
</comment>
<comment type="catalytic activity">
    <reaction evidence="6 10 12 20 21 23 24 28 30 32 35">
        <text>glucuronate acceptor + UDP-alpha-D-glucuronate = acceptor beta-D-glucuronoside + UDP + H(+)</text>
        <dbReference type="Rhea" id="RHEA:21032"/>
        <dbReference type="ChEBI" id="CHEBI:15378"/>
        <dbReference type="ChEBI" id="CHEBI:58052"/>
        <dbReference type="ChEBI" id="CHEBI:58223"/>
        <dbReference type="ChEBI" id="CHEBI:132367"/>
        <dbReference type="ChEBI" id="CHEBI:132368"/>
        <dbReference type="EC" id="2.4.1.17"/>
    </reaction>
    <physiologicalReaction direction="left-to-right" evidence="53 54 55 57 58 61 62 64 65 66">
        <dbReference type="Rhea" id="RHEA:21033"/>
    </physiologicalReaction>
</comment>
<comment type="catalytic activity">
    <reaction evidence="12 24 28 32">
        <text>17beta-estradiol + UDP-alpha-D-glucuronate = 17beta-estradiol 3-O-(beta-D-glucuronate) + UDP + H(+)</text>
        <dbReference type="Rhea" id="RHEA:52460"/>
        <dbReference type="ChEBI" id="CHEBI:15378"/>
        <dbReference type="ChEBI" id="CHEBI:16469"/>
        <dbReference type="ChEBI" id="CHEBI:58052"/>
        <dbReference type="ChEBI" id="CHEBI:58223"/>
        <dbReference type="ChEBI" id="CHEBI:136641"/>
    </reaction>
    <physiologicalReaction direction="left-to-right" evidence="55 61 62 65">
        <dbReference type="Rhea" id="RHEA:52461"/>
    </physiologicalReaction>
</comment>
<comment type="catalytic activity">
    <reaction evidence="12">
        <text>2-hydroxyestrone + UDP-alpha-D-glucuronate = 2-hydroxyestrone 3-O-(beta-D-glucuronate) + UDP + H(+)</text>
        <dbReference type="Rhea" id="RHEA:53048"/>
        <dbReference type="ChEBI" id="CHEBI:1156"/>
        <dbReference type="ChEBI" id="CHEBI:15378"/>
        <dbReference type="ChEBI" id="CHEBI:58052"/>
        <dbReference type="ChEBI" id="CHEBI:58223"/>
        <dbReference type="ChEBI" id="CHEBI:136967"/>
    </reaction>
    <physiologicalReaction direction="left-to-right" evidence="55">
        <dbReference type="Rhea" id="RHEA:53049"/>
    </physiologicalReaction>
</comment>
<comment type="catalytic activity">
    <reaction evidence="12">
        <text>2-hydroxy-17beta-estradiol + UDP-alpha-D-glucuronate = 2-hydroxy-17beta-estradiol 3-O-(beta-D-glucuronate) + UDP + H(+)</text>
        <dbReference type="Rhea" id="RHEA:53004"/>
        <dbReference type="ChEBI" id="CHEBI:15378"/>
        <dbReference type="ChEBI" id="CHEBI:28744"/>
        <dbReference type="ChEBI" id="CHEBI:58052"/>
        <dbReference type="ChEBI" id="CHEBI:58223"/>
        <dbReference type="ChEBI" id="CHEBI:136931"/>
    </reaction>
    <physiologicalReaction direction="left-to-right" evidence="55">
        <dbReference type="Rhea" id="RHEA:53005"/>
    </physiologicalReaction>
</comment>
<comment type="catalytic activity">
    <reaction evidence="12">
        <text>2-methoxy-17beta-estradiol + UDP-alpha-D-glucuronate = 2-methoxy-17beta-estradiol 3-O-(beta-D-glucuronate) + UDP + H(+)</text>
        <dbReference type="Rhea" id="RHEA:53072"/>
        <dbReference type="ChEBI" id="CHEBI:15378"/>
        <dbReference type="ChEBI" id="CHEBI:28955"/>
        <dbReference type="ChEBI" id="CHEBI:58052"/>
        <dbReference type="ChEBI" id="CHEBI:58223"/>
        <dbReference type="ChEBI" id="CHEBI:136974"/>
    </reaction>
    <physiologicalReaction direction="left-to-right" evidence="55">
        <dbReference type="Rhea" id="RHEA:53073"/>
    </physiologicalReaction>
</comment>
<comment type="catalytic activity">
    <reaction evidence="24">
        <text>17alpha-estradiol + UDP-alpha-D-glucuronate = 17alpha-estradiol 3-O-(beta-D-glucuronate) + UDP + H(+)</text>
        <dbReference type="Rhea" id="RHEA:52868"/>
        <dbReference type="ChEBI" id="CHEBI:15378"/>
        <dbReference type="ChEBI" id="CHEBI:17160"/>
        <dbReference type="ChEBI" id="CHEBI:57529"/>
        <dbReference type="ChEBI" id="CHEBI:58052"/>
        <dbReference type="ChEBI" id="CHEBI:58223"/>
    </reaction>
    <physiologicalReaction direction="left-to-right" evidence="61">
        <dbReference type="Rhea" id="RHEA:52869"/>
    </physiologicalReaction>
</comment>
<comment type="catalytic activity">
    <reaction evidence="32">
        <text>16beta,17beta-estriol + UDP-alpha-D-glucuronate = 16beta,17beta-estriol 16-O-(beta-D-glucuronate) + UDP + H(+)</text>
        <dbReference type="Rhea" id="RHEA:52880"/>
        <dbReference type="ChEBI" id="CHEBI:15378"/>
        <dbReference type="ChEBI" id="CHEBI:58052"/>
        <dbReference type="ChEBI" id="CHEBI:58223"/>
        <dbReference type="ChEBI" id="CHEBI:87620"/>
        <dbReference type="ChEBI" id="CHEBI:136886"/>
    </reaction>
    <physiologicalReaction direction="left-to-right" evidence="65">
        <dbReference type="Rhea" id="RHEA:52881"/>
    </physiologicalReaction>
</comment>
<comment type="catalytic activity">
    <reaction evidence="23">
        <text>losartan + UDP-alpha-D-glucuronate = losartan-2-N-beta-D-glucuronide + UDP</text>
        <dbReference type="Rhea" id="RHEA:63720"/>
        <dbReference type="ChEBI" id="CHEBI:58052"/>
        <dbReference type="ChEBI" id="CHEBI:58223"/>
        <dbReference type="ChEBI" id="CHEBI:149504"/>
        <dbReference type="ChEBI" id="CHEBI:149507"/>
    </reaction>
    <physiologicalReaction direction="left-to-right" evidence="60">
        <dbReference type="Rhea" id="RHEA:63721"/>
    </physiologicalReaction>
</comment>
<comment type="catalytic activity">
    <reaction evidence="22">
        <text>prunetin + UDP-alpha-D-glucuronate = prunetin-4'-O-beta-D-glucuronide + UDP</text>
        <dbReference type="Rhea" id="RHEA:63588"/>
        <dbReference type="ChEBI" id="CHEBI:58052"/>
        <dbReference type="ChEBI" id="CHEBI:58223"/>
        <dbReference type="ChEBI" id="CHEBI:147403"/>
        <dbReference type="ChEBI" id="CHEBI:147404"/>
    </reaction>
    <physiologicalReaction direction="left-to-right" evidence="59">
        <dbReference type="Rhea" id="RHEA:63589"/>
    </physiologicalReaction>
</comment>
<comment type="catalytic activity">
    <reaction evidence="6 21">
        <text>SN-38 + UDP-alpha-D-glucuronate = SN-38 O-beta-D-glucuronide + UDP + H(+)</text>
        <dbReference type="Rhea" id="RHEA:63696"/>
        <dbReference type="ChEBI" id="CHEBI:8988"/>
        <dbReference type="ChEBI" id="CHEBI:15378"/>
        <dbReference type="ChEBI" id="CHEBI:58052"/>
        <dbReference type="ChEBI" id="CHEBI:58223"/>
        <dbReference type="ChEBI" id="CHEBI:149482"/>
    </reaction>
    <physiologicalReaction direction="left-to-right" evidence="53 58">
        <dbReference type="Rhea" id="RHEA:63697"/>
    </physiologicalReaction>
</comment>
<comment type="catalytic activity">
    <reaction evidence="34">
        <text>(4Z,15Z)-bilirubin IXalpha + UDP-alpha-D-glucuronate = (4Z,15Z)-bilirubin IXalpha C12-beta-D-glucuronoside + UDP</text>
        <dbReference type="Rhea" id="RHEA:75099"/>
        <dbReference type="ChEBI" id="CHEBI:57977"/>
        <dbReference type="ChEBI" id="CHEBI:58052"/>
        <dbReference type="ChEBI" id="CHEBI:58223"/>
        <dbReference type="ChEBI" id="CHEBI:229705"/>
    </reaction>
    <physiologicalReaction direction="left-to-right" evidence="34">
        <dbReference type="Rhea" id="RHEA:75100"/>
    </physiologicalReaction>
</comment>
<comment type="catalytic activity">
    <reaction evidence="34">
        <text>(4Z,15Z)-bilirubin IXalpha + UDP-alpha-D-glucuronate = (4Z,15Z)-bilirubin IXalpha C8-beta-D-glucuronoside + UDP</text>
        <dbReference type="Rhea" id="RHEA:79067"/>
        <dbReference type="ChEBI" id="CHEBI:57977"/>
        <dbReference type="ChEBI" id="CHEBI:58052"/>
        <dbReference type="ChEBI" id="CHEBI:58223"/>
        <dbReference type="ChEBI" id="CHEBI:229704"/>
    </reaction>
    <physiologicalReaction direction="left-to-right" evidence="34">
        <dbReference type="Rhea" id="RHEA:79068"/>
    </physiologicalReaction>
</comment>
<comment type="catalytic activity">
    <reaction evidence="34">
        <text>(4Z,15Z)-bilirubin IXalpha C8-beta-D-glucuronoside + UDP-alpha-D-glucuronate = (4Z,15Z)-bilirubin IXalpha C8,C12-beta-D-bisglucuronoside + UDP</text>
        <dbReference type="Rhea" id="RHEA:79071"/>
        <dbReference type="ChEBI" id="CHEBI:58052"/>
        <dbReference type="ChEBI" id="CHEBI:58223"/>
        <dbReference type="ChEBI" id="CHEBI:229704"/>
        <dbReference type="ChEBI" id="CHEBI:229706"/>
    </reaction>
    <physiologicalReaction direction="left-to-right" evidence="34">
        <dbReference type="Rhea" id="RHEA:79072"/>
    </physiologicalReaction>
</comment>
<comment type="catalytic activity">
    <reaction evidence="34">
        <text>(4Z,15Z)-bilirubin IXalpha C12-beta-D-glucuronoside + UDP-alpha-D-glucuronate = (4Z,15Z)-bilirubin IXalpha C8,C12-beta-D-bisglucuronoside + UDP</text>
        <dbReference type="Rhea" id="RHEA:79075"/>
        <dbReference type="ChEBI" id="CHEBI:58052"/>
        <dbReference type="ChEBI" id="CHEBI:58223"/>
        <dbReference type="ChEBI" id="CHEBI:229705"/>
        <dbReference type="ChEBI" id="CHEBI:229706"/>
    </reaction>
    <physiologicalReaction direction="left-to-right" evidence="34">
        <dbReference type="Rhea" id="RHEA:79076"/>
    </physiologicalReaction>
</comment>
<comment type="catalytic activity">
    <reaction evidence="35">
        <text>8-iso-prostaglandin F2alpha + UDP-alpha-D-glucuronate = 8-iso-prostaglandin F2alpha-glucuronide + UDP + H(+)</text>
        <dbReference type="Rhea" id="RHEA:79907"/>
        <dbReference type="ChEBI" id="CHEBI:15378"/>
        <dbReference type="ChEBI" id="CHEBI:58052"/>
        <dbReference type="ChEBI" id="CHEBI:58223"/>
        <dbReference type="ChEBI" id="CHEBI:77768"/>
        <dbReference type="ChEBI" id="CHEBI:229786"/>
    </reaction>
    <physiologicalReaction direction="left-to-right" evidence="66">
        <dbReference type="Rhea" id="RHEA:79908"/>
    </physiologicalReaction>
</comment>
<comment type="catalytic activity">
    <reaction evidence="10">
        <text>(5Z,8Z,11Z,14Z)-eicosatetraenoate + UDP-alpha-D-glucuronate = O-[(5Z),(8Z),(11Z),(14Z)-eicosatetraenoyl]-beta-D-glucuronate + UDP</text>
        <dbReference type="Rhea" id="RHEA:79915"/>
        <dbReference type="ChEBI" id="CHEBI:32395"/>
        <dbReference type="ChEBI" id="CHEBI:58052"/>
        <dbReference type="ChEBI" id="CHEBI:58223"/>
        <dbReference type="ChEBI" id="CHEBI:231327"/>
    </reaction>
    <physiologicalReaction direction="left-to-right" evidence="54">
        <dbReference type="Rhea" id="RHEA:79916"/>
    </physiologicalReaction>
</comment>
<comment type="catalytic activity">
    <reaction evidence="10">
        <text>15-hydroxy-(5Z,8Z,11Z,13E)-eicosatetraenoate + UDP-alpha-D-glucuronate = 15-O-(beta-D-glucuronosyl)-(5Z,8Z,11Z,14Z)-eicosatetraenoate + UDP + H(+)</text>
        <dbReference type="Rhea" id="RHEA:79919"/>
        <dbReference type="ChEBI" id="CHEBI:15378"/>
        <dbReference type="ChEBI" id="CHEBI:58052"/>
        <dbReference type="ChEBI" id="CHEBI:58223"/>
        <dbReference type="ChEBI" id="CHEBI:78832"/>
        <dbReference type="ChEBI" id="CHEBI:231329"/>
    </reaction>
    <physiologicalReaction direction="left-to-right" evidence="54">
        <dbReference type="Rhea" id="RHEA:79920"/>
    </physiologicalReaction>
</comment>
<comment type="catalytic activity">
    <reaction evidence="10">
        <text>20-hydroxy-(5Z,8Z,11Z,14Z)-eicosatetraenoate + UDP-alpha-D-glucuronate = 20-O-(beta-D-glucuronosyl)-(5Z,8Z,11Z,14Z)-eicosatetraenoate + UDP + H(+)</text>
        <dbReference type="Rhea" id="RHEA:79927"/>
        <dbReference type="ChEBI" id="CHEBI:15378"/>
        <dbReference type="ChEBI" id="CHEBI:58052"/>
        <dbReference type="ChEBI" id="CHEBI:58223"/>
        <dbReference type="ChEBI" id="CHEBI:76624"/>
        <dbReference type="ChEBI" id="CHEBI:231328"/>
    </reaction>
    <physiologicalReaction direction="left-to-right" evidence="54">
        <dbReference type="Rhea" id="RHEA:79928"/>
    </physiologicalReaction>
</comment>
<comment type="catalytic activity">
    <reaction evidence="10">
        <text>prostaglandin B1 + UDP-alpha-D-glucuronate = 15-O-(beta-D-glucuronosyl)-prostaglandin B1 + UDP + H(+)</text>
        <dbReference type="Rhea" id="RHEA:79935"/>
        <dbReference type="ChEBI" id="CHEBI:15378"/>
        <dbReference type="ChEBI" id="CHEBI:58052"/>
        <dbReference type="ChEBI" id="CHEBI:58223"/>
        <dbReference type="ChEBI" id="CHEBI:133393"/>
        <dbReference type="ChEBI" id="CHEBI:231330"/>
    </reaction>
    <physiologicalReaction direction="left-to-right" evidence="54">
        <dbReference type="Rhea" id="RHEA:79936"/>
    </physiologicalReaction>
</comment>
<comment type="catalytic activity">
    <reaction evidence="30">
        <text>(E)-ferulate + UDP-alpha-D-glucuronate = (E)-4-O-(beta-D-glucuronosyl)-ferulate + UDP + H(+)</text>
        <dbReference type="Rhea" id="RHEA:79951"/>
        <dbReference type="ChEBI" id="CHEBI:15378"/>
        <dbReference type="ChEBI" id="CHEBI:29749"/>
        <dbReference type="ChEBI" id="CHEBI:58052"/>
        <dbReference type="ChEBI" id="CHEBI:58223"/>
        <dbReference type="ChEBI" id="CHEBI:231331"/>
    </reaction>
    <physiologicalReaction direction="left-to-right" evidence="64">
        <dbReference type="Rhea" id="RHEA:79952"/>
    </physiologicalReaction>
</comment>
<comment type="catalytic activity">
    <reaction evidence="30">
        <text>(E)-ferulate + UDP-alpha-D-glucuronate = (E)-ferulic acid beta-D-glucuronate ester + UDP</text>
        <dbReference type="Rhea" id="RHEA:79955"/>
        <dbReference type="ChEBI" id="CHEBI:29749"/>
        <dbReference type="ChEBI" id="CHEBI:58052"/>
        <dbReference type="ChEBI" id="CHEBI:58223"/>
        <dbReference type="ChEBI" id="CHEBI:231332"/>
    </reaction>
    <physiologicalReaction direction="left-to-right" evidence="64">
        <dbReference type="Rhea" id="RHEA:79956"/>
    </physiologicalReaction>
</comment>
<comment type="biophysicochemical properties">
    <kinetics>
        <KM evidence="20">0.26 uM for bilirubin</KM>
        <KM evidence="20">70 uM for 4-methylumbelliferone</KM>
        <KM evidence="12">23 uM for 17beta-estradiol/estradiol (when assaying glucuronidation at position 3)</KM>
        <KM evidence="12">38 uM for estrone (when assaying glucuronidation at position 3)</KM>
        <KM evidence="12">165 uM for the formation of 2-hydroxy-17beta-estradiol 3-O-(beta-D-glucuronate)</KM>
        <KM evidence="12">15 uM for 2-hydroxy-17beta-estradiol (when assaying glucuronidation at position 2)</KM>
        <KM evidence="12">19 uM for 2-hydroxy-estrone (when assaying glucuronidation at position 3)</KM>
        <KM evidence="12">38 uM for 4-hydroxy-17beta-estradiol (when assaying glucuronidation at position 3)</KM>
        <KM evidence="12">74 uM for 4-hydroxy-17beta-estradiol (when assaying glucuronidation at position 4)</KM>
        <KM evidence="12">21 uM for 4-hydroxy-estrone (when assaying glucuronidation at position 3)</KM>
        <KM evidence="12">19 uM for 4-hydroxy-estrone (when assaying glucuronidation at position 4)</KM>
        <KM evidence="12">49 uM for 2-methoxy-17beta-estradiol (when assaying glucuronidation at position 3)</KM>
        <KM evidence="12">49 uM for 2-methoxyestrone (when assaying glucuronidation at position 3)</KM>
        <KM evidence="12">14 uM for 4-methoxy-17beta-estradiol (when assaying glucuronidation at position 3)</KM>
        <KM evidence="12">103 uM for 4-methoxyestrone (when assaying glucuronidation at position 3)</KM>
        <KM evidence="24">60.6 uM for 17beta-estradiol/estradiol (when assaying glucuronidation at position 3)</KM>
        <KM evidence="24">11.2 uM for 17alpha-estradiol/epiestradiol (when assaying glucuronidation at position 3)</KM>
        <KM evidence="10">37.9 uM for (5Z,8Z,11Z,14Z)-eicosatetraenoate</KM>
        <KM evidence="10">42.7 uM for prostaglandin B1</KM>
        <KM evidence="30">1110 uM for (E)-ferulate (when assaying glucuronidation at the phenolic group)</KM>
        <KM evidence="30">830 uM for (E)-ferulate (when assaying glucuronidation at the carboxylic acid group)</KM>
        <KM evidence="23">21.5 uM for losartan (when assaying glucuronidation at position N2 of the tetrazole ring)</KM>
        <KM evidence="6">7.5 uM for SN-38 (when assaying glucuronidation at position 10)</KM>
        <KM evidence="11">410 uM for mycophenolate (when assaying glucuronidation at position 7)</KM>
        <KM evidence="11">320 uM for mycophenolate (when assaying glucuronidation at position 6')</KM>
        <Vmax evidence="20">1080.0 pmol/min/mg enzyme with bilirubin as substrate</Vmax>
        <Vmax evidence="20">255.0 pmol/min/mg enzyme with 4-methylumbelliferone as substrate</Vmax>
        <Vmax evidence="20">274.0 pmol/min/mg enzyme with 1-naphthol as substrate</Vmax>
        <Vmax evidence="20">767.0 pmol/min/mg enzyme with 17beta-estradiol as substrate</Vmax>
        <Vmax evidence="12">93.0 pmol/min/mg enzyme for the formation of 17beta-estradiol 3-O-(beta-D-glucuronate)</Vmax>
        <Vmax evidence="12">3.0 pmol/min/mg enzyme for the formation of estrone 3-O-(beta-D-glucuronate)</Vmax>
        <Vmax evidence="12">1037.0 pmol/min/mg enzyme for the formation of 2-hydroxy-17beta-estradiol 3-O-(beta-D-glucuronate)</Vmax>
        <Vmax evidence="12">36.0 pmol/min/mg enzyme for the formation of 2-hydroxy-17beta-estradiol 2-O-(beta-D-glucuronate)</Vmax>
        <Vmax evidence="12">326.0 pmol/min/mg enzyme for the formation of 2-hydroxy-estrone 3-O-(beta-D-glucuronate)</Vmax>
        <Vmax evidence="12">19.0 pmol/min/mg enzyme for the formation of 4-hydroxy-17beta-estradiol 3-O-(beta-D-glucuronate)</Vmax>
        <Vmax evidence="12">42.0 pmol/min/mg enzyme for the formation of 4-hydroxy-17beta-estradiol 4-O-(beta-D-glucuronate)</Vmax>
        <Vmax evidence="12">34.0 pmol/min/mg enzyme for the formation of 4-hydroxy-estrone 3-O-(beta-D-glucuronate)</Vmax>
        <Vmax evidence="12">11.0 pmol/min/mg enzyme for the formation of 4-hydroxy-estrone 4-O-(beta-D-glucuronate)</Vmax>
        <Vmax evidence="12">222.0 pmol/min/mg enzyme for the formation of 2-methoxy-17beta-estradiol 3-O-(beta-D-glucuronate)</Vmax>
        <Vmax evidence="12">39.0 pmol/min/mg enzyme for the formation of 2-methoxyestrone 3-O-(beta-D-glucuronate)</Vmax>
        <Vmax evidence="12">19.0 pmol/min/mg enzyme for the formation of 4-methoxy-17beta-estradiol 3-O-(beta-D-glucuronate)</Vmax>
        <Vmax evidence="12">4.0 pmol/min/mg enzyme for the formation of 4-methoxyestrone 3-O-(beta-D-glucuronate)</Vmax>
        <Vmax evidence="24">704.0 pmol/min/mg enzyme for the formation of 17beta-estradiol 3-O-(beta-D-glucuronate)</Vmax>
        <Vmax evidence="24">115.0 pmol/min/mg enzyme for the formation of 17alpha-estradiol 3-O-(beta-D-glucuronate)</Vmax>
        <Vmax evidence="23">32.2 pmol/min/mg enzyme for the formation of losartan N2-(beta-D-glucuronate)</Vmax>
        <Vmax evidence="22">40.0 pmol/min/mg enzyme for the formation of prunetin-4'-O-(beta-D-glucuronate)</Vmax>
        <Vmax evidence="15">0.014 pmol/min/mg enzyme with 5alpha-dihydrotestosterone 17-O-(beta-D-glucuronate) as substrate, for the formation of 5alpha-dihydrotestosterone 17-O-[beta-D-glucuronosyl-(1-&gt;2)-glucuronate]</Vmax>
        <Vmax evidence="10">500.0 pmol/min/mg enzyme for the formation of O-[(5Z),(8Z),(11Z),(14Z)-eicosatetraenoyl]-beta-D-glucuronate</Vmax>
        <Vmax evidence="10">1300.0 pmol/min/mg enzyme for the formation of 15-O-(beta-D-glucuronosyl)-prostaglandin B1</Vmax>
        <Vmax evidence="30">337.1 pmol/min/mg enzyme for the formation of (E)-4-O-(beta-D-glucuronosyl)-ferulate</Vmax>
        <Vmax evidence="30">990.4 pmol/min/mg enzyme for the formation of (E)-ferulic acid beta-D-glucuronate ester</Vmax>
        <Vmax evidence="6">33.4 pmol/min/mg enzyme for the formation of SN-38 glucuronide</Vmax>
        <Vmax evidence="11">110.0 pmol/min/mg enzyme for the formation of mycophenolate 7-O-glucuronide</Vmax>
        <Vmax evidence="11">30.0 pmol/min/mg enzyme for the formation of mycophenolic acid O-acyl-glucuronide</Vmax>
        <text evidence="56 59">Some kinetic parameters were assessed using commercial enzymes, which may represent a mix of both active and inactive protein forms, and therefore modify the kinetic values.</text>
    </kinetics>
</comment>
<comment type="subunit">
    <text evidence="16 17 29 63">Homodimer (PubMed:17179145). Homooligomer (Probable). Interacts with UGT1A3, UGT1A4, UGT1A6, UGT1A7, UGT1A8, UGT1A9 and UGT1A10 to form heterodimers (PubMed:17179145). Isoform 1 interacts with isoform 2/i2 suggesting that oligomerization is involved in negative regulation of transferase activity by isoform 2 (PubMed:17187418, PubMed:20610558). Isoform 1 also interacts with respective i2 isoforms of UGT1A3, UGT1A4, UGT1A6, UGT1A7, UGT1A8, UGT1A9 and UGT1A10 (PubMed:20610558).</text>
</comment>
<comment type="interaction">
    <interactant intactId="EBI-3940292">
        <id>P22309</id>
    </interactant>
    <interactant intactId="EBI-355956">
        <id>Q9BSJ8</id>
        <label>ESYT1</label>
    </interactant>
    <organismsDiffer>false</organismsDiffer>
    <experiments>2</experiments>
</comment>
<comment type="interaction">
    <interactant intactId="EBI-9482608">
        <id>P22309-1</id>
    </interactant>
    <interactant intactId="EBI-9490970">
        <id>P22309-2</id>
        <label>UGT1A1</label>
    </interactant>
    <organismsDiffer>false</organismsDiffer>
    <experiments>3</experiments>
</comment>
<comment type="interaction">
    <interactant intactId="EBI-9490970">
        <id>P22309-2</id>
    </interactant>
    <interactant intactId="EBI-9486373">
        <id>O60656-1</id>
        <label>UGT1A9</label>
    </interactant>
    <organismsDiffer>false</organismsDiffer>
    <experiments>3</experiments>
</comment>
<comment type="subcellular location">
    <subcellularLocation>
        <location evidence="16 17">Endoplasmic reticulum membrane</location>
        <topology evidence="1">Single-pass membrane protein</topology>
    </subcellularLocation>
    <subcellularLocation>
        <location evidence="17">Cytoplasm</location>
        <location evidence="17">Perinuclear region</location>
    </subcellularLocation>
</comment>
<comment type="alternative products">
    <event type="alternative splicing"/>
    <isoform>
        <id>P22309-1</id>
        <name>1</name>
        <name evidence="49">i1</name>
        <sequence type="displayed"/>
    </isoform>
    <isoform>
        <id>P22309-2</id>
        <name>2</name>
        <name evidence="49">i2</name>
        <name>UGT1A1s</name>
        <sequence type="described" ref="VSP_053958"/>
    </isoform>
</comment>
<comment type="tissue specificity">
    <molecule>Isoform 1</molecule>
    <text evidence="8 17 21">Expressed in liver, colon and small intestine. Not expressed in kidney, esophagus and skin.</text>
</comment>
<comment type="tissue specificity">
    <molecule>Isoform 2</molecule>
    <text evidence="8 17 21">Expressed in liver, colon, small intestine and kidney. Not expressed in esophagus and skin.</text>
</comment>
<comment type="polymorphism">
    <text evidence="26">Genetic variation in UGT1A1 defines the bilirubin serum levels quantitative trait locus 1 (BILIQTL1) [MIM:601816]. Variation in serum bilirubin is associated with altered cardiovascular disease risk and drug metabolism.</text>
</comment>
<comment type="disease" evidence="2 5 6 19 36 45">
    <disease id="DI-01659">
        <name>Gilbert syndrome</name>
        <acronym>GILBS</acronym>
        <description>Occurs as a consequence of reduced bilirubin transferase activity and is often detected in young adults with vague non-specific complaints.</description>
        <dbReference type="MIM" id="143500"/>
    </disease>
    <text>The disease is caused by variants affecting the gene represented in this entry.</text>
</comment>
<comment type="disease" evidence="3 6">
    <disease id="DI-02379">
        <name>Transient familial neonatal hyperbilirubinemia</name>
        <acronym>HBLRTFN</acronym>
        <description>A condition characterized by excessive concentration of bilirubin in the blood, which may lead to jaundice. Breast milk jaundice is a common problem in nursing infants.</description>
        <dbReference type="MIM" id="237900"/>
    </disease>
    <text>The disease may be caused by variants affecting the gene represented in this entry. The defect has been ascribed to various breast milk substances, but the component or combination of components that is responsible remains unclear. Defects of UGT1A1 are an underlying cause of the prolonged unconjugated hyperbilirubinemia associated with breast milk. One or more components in the milk may trigger the jaundice in infants who have such mutations. Mutations are identical to those detected in patients with Gilbert syndrome, a risk factor of neonatal non-physiologic hyperbilirubinemia and a genetic factor in fasting hyperbilirubinemia.</text>
</comment>
<comment type="disease" evidence="2 13 14 18 28 33 37 38 39 40">
    <disease id="DI-01449">
        <name>Crigler-Najjar syndrome 1</name>
        <acronym>CN1</acronym>
        <description>Patients have severe hyperbilirubinemia and usually die of kernicterus (bilirubin accumulation in the basal ganglia and brainstem nuclei) within the first year of life. CN1 inheritance is autosomal recessive.</description>
        <dbReference type="MIM" id="218800"/>
    </disease>
    <text>The disease is caused by variants affecting the gene represented in this entry.</text>
</comment>
<comment type="disease" evidence="2 4 6 7 9 13 18 20 28 31 33 39 41 42 43 44 46">
    <disease id="DI-01450">
        <name>Crigler-Najjar syndrome 2</name>
        <acronym>CN2</acronym>
        <description>Patients have less severe hyperbilirubinemia and usually survive into adulthood without neurologic damage. Phenobarbital, which induces the partially deficient glucuronyl transferase, can diminish the jaundice. CN2 inheritance is autosomal dominant.</description>
        <dbReference type="MIM" id="606785"/>
    </disease>
    <text>The disease is caused by variants affecting the gene represented in this entry.</text>
</comment>
<comment type="miscellaneous">
    <text evidence="21">UGT1A1 isoform is part of the UGT1A complex locus which displays alternative use of promoters, first exons and terminal exons. The locus is defined by 13 first exons, which are alternatively spliced to 3 other common exons and 2 alternative terminal exons 5. From the 27 possible mRNA isoforms, 9 produce functionally active polypeptides (UGT1A1, 1A3, 1A4, 1A5, 1A6, 1A7, 1A8, 1A9 and 1A10) called isoforms 1 (i1). Use of an alternative exon 5 (5b) as terminal exon is leading to 9 additional alternatively spliced products termed isoforms i2 and which lack transferase activity.</text>
</comment>
<comment type="similarity">
    <text evidence="52">Belongs to the UDP-glycosyltransferase family.</text>
</comment>
<comment type="sequence caution" evidence="52">
    <conflict type="erroneous gene model prediction">
        <sequence resource="EMBL-CDS" id="AAA61247"/>
    </conflict>
</comment>
<comment type="sequence caution" evidence="52">
    <conflict type="erroneous gene model prediction">
        <sequence resource="EMBL-CDS" id="AAF03522"/>
    </conflict>
</comment>
<comment type="online information" name="Wikipedia">
    <link uri="https://en.wikipedia.org/wiki/Glucuronosyltransferase"/>
    <text>Glucuronosyltransferase entry</text>
</comment>